<sequence length="476" mass="50288">MSGPTWLPPKQPEPARAPQGRAIPRGTPGPPPAHGAALQPHPRVNFCPLPSEQCYQAPGGPEDRGPAWVGSHGVLQHTQGLPADRGGLRPGSLDAEIDLLSSTLAELNGGRGHASRRPDRQAYEPPPPPAYRTGSLKPNPASPLPASPYGGPTPASYTTASTPAGPAFPVQVKVAQPVRGCGPPRRGASQASGPLPGPHFPLPGRGEVWGPGYRSQREPGPGAKEEAAGVSGPAGRGRGGEHGPQVPLSQPPEDELDRLTKKLVHDMNHPPSGEYFGQCGGCGEDVVGDGAGVVALDRVFHVGCFVCSTCRAQLRGQHFYAVERRAYCEGCYVATLEKCATCSQPILDRILRAMGKAYHPGCFTCVVCHRGLDGIPFTVDATSQIHCIEDFHRKFAPRCSVCGGAIMPEPGQEETVRIVALDRSFHIGCYKCEECGLLLSSEGECQGCYPLDGHILCKACSAWRIQELSATVTTDC</sequence>
<keyword id="KW-0002">3D-structure</keyword>
<keyword id="KW-0025">Alternative splicing</keyword>
<keyword id="KW-0130">Cell adhesion</keyword>
<keyword id="KW-0965">Cell junction</keyword>
<keyword id="KW-0963">Cytoplasm</keyword>
<keyword id="KW-0206">Cytoskeleton</keyword>
<keyword id="KW-0440">LIM domain</keyword>
<keyword id="KW-0479">Metal-binding</keyword>
<keyword id="KW-0488">Methylation</keyword>
<keyword id="KW-0539">Nucleus</keyword>
<keyword id="KW-0597">Phosphoprotein</keyword>
<keyword id="KW-1267">Proteomics identification</keyword>
<keyword id="KW-1185">Reference proteome</keyword>
<keyword id="KW-0677">Repeat</keyword>
<keyword id="KW-0804">Transcription</keyword>
<keyword id="KW-0805">Transcription regulation</keyword>
<keyword id="KW-0862">Zinc</keyword>
<organism>
    <name type="scientific">Homo sapiens</name>
    <name type="common">Human</name>
    <dbReference type="NCBI Taxonomy" id="9606"/>
    <lineage>
        <taxon>Eukaryota</taxon>
        <taxon>Metazoa</taxon>
        <taxon>Chordata</taxon>
        <taxon>Craniata</taxon>
        <taxon>Vertebrata</taxon>
        <taxon>Euteleostomi</taxon>
        <taxon>Mammalia</taxon>
        <taxon>Eutheria</taxon>
        <taxon>Euarchontoglires</taxon>
        <taxon>Primates</taxon>
        <taxon>Haplorrhini</taxon>
        <taxon>Catarrhini</taxon>
        <taxon>Hominidae</taxon>
        <taxon>Homo</taxon>
    </lineage>
</organism>
<comment type="function">
    <text evidence="6 7 11 15">Relays signals from the cell surface to the nucleus to weaken adherens junction and promote actin cytoskeleton reorganization and cell invasiveness. Involved in lysophosphatidic acid-induced cell adhesion and migration. Acts as a transcriptional coactivator for NF-kappa-B and JUN, and mediates the transrepression of these transcription factors induced by glucocorticoid receptor.</text>
</comment>
<comment type="subunit">
    <text evidence="1 4 5 6 10 11 12 13 14 15">Specifically interacts with the ligand binding domain of the thyroid receptor (TR) in the presence of thyroid hormone (PubMed:14688263). Interacts (via the third LIM domain and C-terminus) with PTPN13 (via the second PDZ domain) (PubMed:10400701, PubMed:10826496, PubMed:17591779, PubMed:19017743). Interacts (via the second LIM domain or via the third LIM domain plus C-terminus) with PDLIM4 (via PDZ domain) (PubMed:10826496). Found in a complex with PTPN13 and PDLIM4 (By similarity). Interacts with SVIL isoform 2 (PubMed:16880273). Interacts with LPAR2 but not other LPA receptors (PubMed:14688263). Interacts with PRKAA2 (PubMed:16624523). Interacts with MAGI1 (PubMed:19017743). Interacts with SCRIB (PubMed:16137684). In case of infection, interacts with S.typhimurium protein sseI (PubMed:17095609).</text>
</comment>
<comment type="interaction">
    <interactant intactId="EBI-742327">
        <id>Q15654</id>
    </interactant>
    <interactant intactId="EBI-743598">
        <id>Q9NYB9</id>
        <label>ABI2</label>
    </interactant>
    <organismsDiffer>false</organismsDiffer>
    <experiments>5</experiments>
</comment>
<comment type="interaction">
    <interactant intactId="EBI-742327">
        <id>Q15654</id>
    </interactant>
    <interactant intactId="EBI-10173507">
        <id>Q6UY14-3</id>
        <label>ADAMTSL4</label>
    </interactant>
    <organismsDiffer>false</organismsDiffer>
    <experiments>3</experiments>
</comment>
<comment type="interaction">
    <interactant intactId="EBI-742327">
        <id>Q15654</id>
    </interactant>
    <interactant intactId="EBI-745213">
        <id>P29972</id>
        <label>AQP1</label>
    </interactant>
    <organismsDiffer>false</organismsDiffer>
    <experiments>7</experiments>
</comment>
<comment type="interaction">
    <interactant intactId="EBI-742327">
        <id>Q15654</id>
    </interactant>
    <interactant intactId="EBI-945980">
        <id>P54259</id>
        <label>ATN1</label>
    </interactant>
    <organismsDiffer>false</organismsDiffer>
    <experiments>2</experiments>
</comment>
<comment type="interaction">
    <interactant intactId="EBI-742327">
        <id>Q15654</id>
    </interactant>
    <interactant intactId="EBI-355815">
        <id>P48047</id>
        <label>ATP5PO</label>
    </interactant>
    <organismsDiffer>false</organismsDiffer>
    <experiments>3</experiments>
</comment>
<comment type="interaction">
    <interactant intactId="EBI-742327">
        <id>Q15654</id>
    </interactant>
    <interactant intactId="EBI-930964">
        <id>P54253</id>
        <label>ATXN1</label>
    </interactant>
    <organismsDiffer>false</organismsDiffer>
    <experiments>7</experiments>
</comment>
<comment type="interaction">
    <interactant intactId="EBI-742327">
        <id>Q15654</id>
    </interactant>
    <interactant intactId="EBI-16429430">
        <id>A0A0S2Z4M1</id>
        <label>AXIN1</label>
    </interactant>
    <organismsDiffer>false</organismsDiffer>
    <experiments>3</experiments>
</comment>
<comment type="interaction">
    <interactant intactId="EBI-742327">
        <id>Q15654</id>
    </interactant>
    <interactant intactId="EBI-710484">
        <id>O15169</id>
        <label>AXIN1</label>
    </interactant>
    <organismsDiffer>false</organismsDiffer>
    <experiments>6</experiments>
</comment>
<comment type="interaction">
    <interactant intactId="EBI-742327">
        <id>Q15654</id>
    </interactant>
    <interactant intactId="EBI-747185">
        <id>O95817</id>
        <label>BAG3</label>
    </interactant>
    <organismsDiffer>false</organismsDiffer>
    <experiments>3</experiments>
</comment>
<comment type="interaction">
    <interactant intactId="EBI-742327">
        <id>Q15654</id>
    </interactant>
    <interactant intactId="EBI-745073">
        <id>Q9BXY8</id>
        <label>BEX2</label>
    </interactant>
    <organismsDiffer>false</organismsDiffer>
    <experiments>3</experiments>
</comment>
<comment type="interaction">
    <interactant intactId="EBI-742327">
        <id>Q15654</id>
    </interactant>
    <interactant intactId="EBI-358049">
        <id>Q13895</id>
        <label>BYSL</label>
    </interactant>
    <organismsDiffer>false</organismsDiffer>
    <experiments>6</experiments>
</comment>
<comment type="interaction">
    <interactant intactId="EBI-742327">
        <id>Q15654</id>
    </interactant>
    <interactant intactId="EBI-6660291">
        <id>Q6NUJ2</id>
        <label>C11orf87</label>
    </interactant>
    <organismsDiffer>false</organismsDiffer>
    <experiments>3</experiments>
</comment>
<comment type="interaction">
    <interactant intactId="EBI-742327">
        <id>Q15654</id>
    </interactant>
    <interactant intactId="EBI-744545">
        <id>Q8NEC5</id>
        <label>CATSPER1</label>
    </interactant>
    <organismsDiffer>false</organismsDiffer>
    <experiments>7</experiments>
</comment>
<comment type="interaction">
    <interactant intactId="EBI-742327">
        <id>Q15654</id>
    </interactant>
    <interactant intactId="EBI-744556">
        <id>Q96HB5</id>
        <label>CCDC120</label>
    </interactant>
    <organismsDiffer>false</organismsDiffer>
    <experiments>3</experiments>
</comment>
<comment type="interaction">
    <interactant intactId="EBI-742327">
        <id>Q15654</id>
    </interactant>
    <interactant intactId="EBI-1104933">
        <id>Q8N4L8</id>
        <label>CCDC24</label>
    </interactant>
    <organismsDiffer>false</organismsDiffer>
    <experiments>3</experiments>
</comment>
<comment type="interaction">
    <interactant intactId="EBI-742327">
        <id>Q15654</id>
    </interactant>
    <interactant intactId="EBI-10181988">
        <id>Q8IYX8-2</id>
        <label>CEP57L1</label>
    </interactant>
    <organismsDiffer>false</organismsDiffer>
    <experiments>3</experiments>
</comment>
<comment type="interaction">
    <interactant intactId="EBI-742327">
        <id>Q15654</id>
    </interactant>
    <interactant intactId="EBI-1050897">
        <id>P26441</id>
        <label>CNTF</label>
    </interactant>
    <organismsDiffer>false</organismsDiffer>
    <experiments>3</experiments>
</comment>
<comment type="interaction">
    <interactant intactId="EBI-742327">
        <id>Q15654</id>
    </interactant>
    <interactant intactId="EBI-10192698">
        <id>Q02930-3</id>
        <label>CREB5</label>
    </interactant>
    <organismsDiffer>false</organismsDiffer>
    <experiments>3</experiments>
</comment>
<comment type="interaction">
    <interactant intactId="EBI-742327">
        <id>Q15654</id>
    </interactant>
    <interactant intactId="EBI-7519711">
        <id>P53673</id>
        <label>CRYBA4</label>
    </interactant>
    <organismsDiffer>false</organismsDiffer>
    <experiments>3</experiments>
</comment>
<comment type="interaction">
    <interactant intactId="EBI-742327">
        <id>Q15654</id>
    </interactant>
    <interactant intactId="EBI-10188927">
        <id>O75638</id>
        <label>CTAG2</label>
    </interactant>
    <organismsDiffer>false</organismsDiffer>
    <experiments>4</experiments>
</comment>
<comment type="interaction">
    <interactant intactId="EBI-742327">
        <id>Q15654</id>
    </interactant>
    <interactant intactId="EBI-9679045">
        <id>Q9NQL9</id>
        <label>DMRT3</label>
    </interactant>
    <organismsDiffer>false</organismsDiffer>
    <experiments>3</experiments>
</comment>
<comment type="interaction">
    <interactant intactId="EBI-742327">
        <id>Q15654</id>
    </interactant>
    <interactant intactId="EBI-740376">
        <id>Q86UW9</id>
        <label>DTX2</label>
    </interactant>
    <organismsDiffer>false</organismsDiffer>
    <experiments>3</experiments>
</comment>
<comment type="interaction">
    <interactant intactId="EBI-742327">
        <id>Q15654</id>
    </interactant>
    <interactant intactId="EBI-743105">
        <id>Q5JVL4</id>
        <label>EFHC1</label>
    </interactant>
    <organismsDiffer>false</organismsDiffer>
    <experiments>3</experiments>
</comment>
<comment type="interaction">
    <interactant intactId="EBI-742327">
        <id>Q15654</id>
    </interactant>
    <interactant intactId="EBI-946972">
        <id>Q9UM22</id>
        <label>EPDR1</label>
    </interactant>
    <organismsDiffer>false</organismsDiffer>
    <experiments>3</experiments>
</comment>
<comment type="interaction">
    <interactant intactId="EBI-742327">
        <id>Q15654</id>
    </interactant>
    <interactant intactId="EBI-749333">
        <id>Q8N2X6</id>
        <label>EXOC3-AS1</label>
    </interactant>
    <organismsDiffer>false</organismsDiffer>
    <experiments>4</experiments>
</comment>
<comment type="interaction">
    <interactant intactId="EBI-742327">
        <id>Q15654</id>
    </interactant>
    <interactant intactId="EBI-2807642">
        <id>Q8WU58</id>
        <label>FAM222B</label>
    </interactant>
    <organismsDiffer>false</organismsDiffer>
    <experiments>3</experiments>
</comment>
<comment type="interaction">
    <interactant intactId="EBI-742327">
        <id>Q15654</id>
    </interactant>
    <interactant intactId="EBI-2513774">
        <id>O95363</id>
        <label>FARS2</label>
    </interactant>
    <organismsDiffer>false</organismsDiffer>
    <experiments>3</experiments>
</comment>
<comment type="interaction">
    <interactant intactId="EBI-742327">
        <id>Q15654</id>
    </interactant>
    <interactant intactId="EBI-495538">
        <id>P48023</id>
        <label>FASLG</label>
    </interactant>
    <organismsDiffer>false</organismsDiffer>
    <experiments>3</experiments>
</comment>
<comment type="interaction">
    <interactant intactId="EBI-742327">
        <id>Q15654</id>
    </interactant>
    <interactant intactId="EBI-11320806">
        <id>Q9NU39</id>
        <label>FOXD4L1</label>
    </interactant>
    <organismsDiffer>false</organismsDiffer>
    <experiments>3</experiments>
</comment>
<comment type="interaction">
    <interactant intactId="EBI-742327">
        <id>Q15654</id>
    </interactant>
    <interactant intactId="EBI-725515">
        <id>O43559</id>
        <label>FRS3</label>
    </interactant>
    <organismsDiffer>false</organismsDiffer>
    <experiments>6</experiments>
</comment>
<comment type="interaction">
    <interactant intactId="EBI-742327">
        <id>Q15654</id>
    </interactant>
    <interactant intactId="EBI-16430771">
        <id>A0A0S2Z4D9</id>
        <label>GAD1</label>
    </interactant>
    <organismsDiffer>false</organismsDiffer>
    <experiments>3</experiments>
</comment>
<comment type="interaction">
    <interactant intactId="EBI-742327">
        <id>Q15654</id>
    </interactant>
    <interactant intactId="EBI-9090198">
        <id>P15976-2</id>
        <label>GATA1</label>
    </interactant>
    <organismsDiffer>false</organismsDiffer>
    <experiments>4</experiments>
</comment>
<comment type="interaction">
    <interactant intactId="EBI-742327">
        <id>Q15654</id>
    </interactant>
    <interactant intactId="EBI-10310206">
        <id>Q9HBR3</id>
        <label>GDPD5</label>
    </interactant>
    <organismsDiffer>false</organismsDiffer>
    <experiments>3</experiments>
</comment>
<comment type="interaction">
    <interactant intactId="EBI-742327">
        <id>Q15654</id>
    </interactant>
    <interactant intactId="EBI-12232117">
        <id>Q8NEA6-2</id>
        <label>GLIS3</label>
    </interactant>
    <organismsDiffer>false</organismsDiffer>
    <experiments>3</experiments>
</comment>
<comment type="interaction">
    <interactant intactId="EBI-742327">
        <id>Q15654</id>
    </interactant>
    <interactant intactId="EBI-353997">
        <id>P04899</id>
        <label>GNAI2</label>
    </interactant>
    <organismsDiffer>false</organismsDiffer>
    <experiments>3</experiments>
</comment>
<comment type="interaction">
    <interactant intactId="EBI-742327">
        <id>Q15654</id>
    </interactant>
    <interactant intactId="EBI-11975289">
        <id>Q9Y223-2</id>
        <label>GNE</label>
    </interactant>
    <organismsDiffer>false</organismsDiffer>
    <experiments>3</experiments>
</comment>
<comment type="interaction">
    <interactant intactId="EBI-742327">
        <id>Q15654</id>
    </interactant>
    <interactant intactId="EBI-713355">
        <id>Q13227</id>
        <label>GPS2</label>
    </interactant>
    <organismsDiffer>false</organismsDiffer>
    <experiments>3</experiments>
</comment>
<comment type="interaction">
    <interactant intactId="EBI-742327">
        <id>Q15654</id>
    </interactant>
    <interactant intactId="EBI-372619">
        <id>Q14687</id>
        <label>GSE1</label>
    </interactant>
    <organismsDiffer>false</organismsDiffer>
    <experiments>5</experiments>
</comment>
<comment type="interaction">
    <interactant intactId="EBI-742327">
        <id>Q15654</id>
    </interactant>
    <interactant intactId="EBI-9834454">
        <id>P08631-2</id>
        <label>HCK</label>
    </interactant>
    <organismsDiffer>false</organismsDiffer>
    <experiments>3</experiments>
</comment>
<comment type="interaction">
    <interactant intactId="EBI-742327">
        <id>Q15654</id>
    </interactant>
    <interactant intactId="EBI-10330219">
        <id>V9HWD0</id>
        <label>HEL-S-42</label>
    </interactant>
    <organismsDiffer>false</organismsDiffer>
    <experiments>3</experiments>
</comment>
<comment type="interaction">
    <interactant intactId="EBI-742327">
        <id>Q15654</id>
    </interactant>
    <interactant intactId="EBI-742314">
        <id>P31269</id>
        <label>HOXA9</label>
    </interactant>
    <organismsDiffer>false</organismsDiffer>
    <experiments>6</experiments>
</comment>
<comment type="interaction">
    <interactant intactId="EBI-742327">
        <id>Q15654</id>
    </interactant>
    <interactant intactId="EBI-745290">
        <id>P17482</id>
        <label>HOXB9</label>
    </interactant>
    <organismsDiffer>false</organismsDiffer>
    <experiments>3</experiments>
</comment>
<comment type="interaction">
    <interactant intactId="EBI-742327">
        <id>Q15654</id>
    </interactant>
    <interactant intactId="EBI-1752118">
        <id>P31273</id>
        <label>HOXC8</label>
    </interactant>
    <organismsDiffer>false</organismsDiffer>
    <experiments>3</experiments>
</comment>
<comment type="interaction">
    <interactant intactId="EBI-742327">
        <id>Q15654</id>
    </interactant>
    <interactant intactId="EBI-466029">
        <id>P42858</id>
        <label>HTT</label>
    </interactant>
    <organismsDiffer>false</organismsDiffer>
    <experiments>3</experiments>
</comment>
<comment type="interaction">
    <interactant intactId="EBI-742327">
        <id>Q15654</id>
    </interactant>
    <interactant intactId="EBI-10236738">
        <id>A0A0C4DGM4</id>
        <label>HYKK</label>
    </interactant>
    <organismsDiffer>false</organismsDiffer>
    <experiments>3</experiments>
</comment>
<comment type="interaction">
    <interactant intactId="EBI-742327">
        <id>Q15654</id>
    </interactant>
    <interactant intactId="EBI-6509505">
        <id>Q0VD86</id>
        <label>INCA1</label>
    </interactant>
    <organismsDiffer>false</organismsDiffer>
    <experiments>3</experiments>
</comment>
<comment type="interaction">
    <interactant intactId="EBI-742327">
        <id>Q15654</id>
    </interactant>
    <interactant intactId="EBI-10990676">
        <id>Q96PC2</id>
        <label>IP6K3</label>
    </interactant>
    <organismsDiffer>false</organismsDiffer>
    <experiments>3</experiments>
</comment>
<comment type="interaction">
    <interactant intactId="EBI-742327">
        <id>Q15654</id>
    </interactant>
    <interactant intactId="EBI-11051601">
        <id>P16144-2</id>
        <label>ITGB4</label>
    </interactant>
    <organismsDiffer>false</organismsDiffer>
    <experiments>3</experiments>
</comment>
<comment type="interaction">
    <interactant intactId="EBI-742327">
        <id>Q15654</id>
    </interactant>
    <interactant intactId="EBI-4397613">
        <id>Q7L273</id>
        <label>KCTD9</label>
    </interactant>
    <organismsDiffer>false</organismsDiffer>
    <experiments>3</experiments>
</comment>
<comment type="interaction">
    <interactant intactId="EBI-742327">
        <id>Q15654</id>
    </interactant>
    <interactant intactId="EBI-10294579">
        <id>Q99706</id>
        <label>KIR2DL4</label>
    </interactant>
    <organismsDiffer>false</organismsDiffer>
    <experiments>3</experiments>
</comment>
<comment type="interaction">
    <interactant intactId="EBI-742327">
        <id>Q15654</id>
    </interactant>
    <interactant intactId="EBI-8645371">
        <id>Q9H2R5</id>
        <label>KLK15</label>
    </interactant>
    <organismsDiffer>false</organismsDiffer>
    <experiments>3</experiments>
</comment>
<comment type="interaction">
    <interactant intactId="EBI-742327">
        <id>Q15654</id>
    </interactant>
    <interactant intactId="EBI-10981970">
        <id>Q5T749</id>
        <label>KPRP</label>
    </interactant>
    <organismsDiffer>false</organismsDiffer>
    <experiments>3</experiments>
</comment>
<comment type="interaction">
    <interactant intactId="EBI-742327">
        <id>Q15654</id>
    </interactant>
    <interactant intactId="EBI-3957672">
        <id>Q6PEX3</id>
        <label>KRTAP26-1</label>
    </interactant>
    <organismsDiffer>false</organismsDiffer>
    <experiments>3</experiments>
</comment>
<comment type="interaction">
    <interactant intactId="EBI-742327">
        <id>Q15654</id>
    </interactant>
    <interactant intactId="EBI-739696">
        <id>P25791</id>
        <label>LMO2</label>
    </interactant>
    <organismsDiffer>false</organismsDiffer>
    <experiments>3</experiments>
</comment>
<comment type="interaction">
    <interactant intactId="EBI-742327">
        <id>Q15654</id>
    </interactant>
    <interactant intactId="EBI-739832">
        <id>Q8TBB1</id>
        <label>LNX1</label>
    </interactant>
    <organismsDiffer>false</organismsDiffer>
    <experiments>3</experiments>
</comment>
<comment type="interaction">
    <interactant intactId="EBI-742327">
        <id>Q15654</id>
    </interactant>
    <interactant intactId="EBI-947402">
        <id>O60336</id>
        <label>MAPKBP1</label>
    </interactant>
    <organismsDiffer>false</organismsDiffer>
    <experiments>3</experiments>
</comment>
<comment type="interaction">
    <interactant intactId="EBI-742327">
        <id>Q15654</id>
    </interactant>
    <interactant intactId="EBI-1104564">
        <id>Q9Y316</id>
        <label>MEMO1</label>
    </interactant>
    <organismsDiffer>false</organismsDiffer>
    <experiments>3</experiments>
</comment>
<comment type="interaction">
    <interactant intactId="EBI-742327">
        <id>Q15654</id>
    </interactant>
    <interactant intactId="EBI-749353">
        <id>Q9H7H0</id>
        <label>METTL17</label>
    </interactant>
    <organismsDiffer>false</organismsDiffer>
    <experiments>5</experiments>
</comment>
<comment type="interaction">
    <interactant intactId="EBI-742327">
        <id>Q15654</id>
    </interactant>
    <interactant intactId="EBI-14086479">
        <id>Q8IVT4</id>
        <label>MGC50722</label>
    </interactant>
    <organismsDiffer>false</organismsDiffer>
    <experiments>3</experiments>
</comment>
<comment type="interaction">
    <interactant intactId="EBI-742327">
        <id>Q15654</id>
    </interactant>
    <interactant intactId="EBI-6137472">
        <id>Q9BRT3</id>
        <label>MIEN1</label>
    </interactant>
    <organismsDiffer>false</organismsDiffer>
    <experiments>3</experiments>
</comment>
<comment type="interaction">
    <interactant intactId="EBI-742327">
        <id>Q15654</id>
    </interactant>
    <interactant intactId="EBI-2801965">
        <id>Q5JXC2</id>
        <label>MIIP</label>
    </interactant>
    <organismsDiffer>false</organismsDiffer>
    <experiments>3</experiments>
</comment>
<comment type="interaction">
    <interactant intactId="EBI-742327">
        <id>Q15654</id>
    </interactant>
    <interactant intactId="EBI-2555085">
        <id>Q8IVT2</id>
        <label>MISP</label>
    </interactant>
    <organismsDiffer>false</organismsDiffer>
    <experiments>3</experiments>
</comment>
<comment type="interaction">
    <interactant intactId="EBI-742327">
        <id>Q15654</id>
    </interactant>
    <interactant intactId="EBI-8634060">
        <id>Q8IXL7</id>
        <label>MSRB3</label>
    </interactant>
    <organismsDiffer>false</organismsDiffer>
    <experiments>3</experiments>
</comment>
<comment type="interaction">
    <interactant intactId="EBI-742327">
        <id>Q15654</id>
    </interactant>
    <interactant intactId="EBI-713635">
        <id>O43639</id>
        <label>NCK2</label>
    </interactant>
    <organismsDiffer>false</organismsDiffer>
    <experiments>8</experiments>
</comment>
<comment type="interaction">
    <interactant intactId="EBI-742327">
        <id>Q15654</id>
    </interactant>
    <interactant intactId="EBI-2108053">
        <id>Q14511</id>
        <label>NEDD9</label>
    </interactant>
    <organismsDiffer>false</organismsDiffer>
    <experiments>3</experiments>
</comment>
<comment type="interaction">
    <interactant intactId="EBI-742327">
        <id>Q15654</id>
    </interactant>
    <interactant intactId="EBI-10277551">
        <id>Q8WWR8-2</id>
        <label>NEU4</label>
    </interactant>
    <organismsDiffer>false</organismsDiffer>
    <experiments>3</experiments>
</comment>
<comment type="interaction">
    <interactant intactId="EBI-742327">
        <id>Q15654</id>
    </interactant>
    <interactant intactId="EBI-10250949">
        <id>Q6NSM0</id>
        <label>NR1D2</label>
    </interactant>
    <organismsDiffer>false</organismsDiffer>
    <experiments>3</experiments>
</comment>
<comment type="interaction">
    <interactant intactId="EBI-742327">
        <id>Q15654</id>
    </interactant>
    <interactant intactId="EBI-12028784">
        <id>Q6X4W1-2</id>
        <label>NSMF</label>
    </interactant>
    <organismsDiffer>false</organismsDiffer>
    <experiments>3</experiments>
</comment>
<comment type="interaction">
    <interactant intactId="EBI-742327">
        <id>Q15654</id>
    </interactant>
    <interactant intactId="EBI-536879">
        <id>O43482</id>
        <label>OIP5</label>
    </interactant>
    <organismsDiffer>false</organismsDiffer>
    <experiments>4</experiments>
</comment>
<comment type="interaction">
    <interactant intactId="EBI-742327">
        <id>Q15654</id>
    </interactant>
    <interactant intactId="EBI-10300896">
        <id>Q9BWI9</id>
        <label>OTUB2</label>
    </interactant>
    <organismsDiffer>false</organismsDiffer>
    <experiments>3</experiments>
</comment>
<comment type="interaction">
    <interactant intactId="EBI-742327">
        <id>Q15654</id>
    </interactant>
    <interactant intactId="EBI-740446">
        <id>P32242</id>
        <label>OTX1</label>
    </interactant>
    <organismsDiffer>false</organismsDiffer>
    <experiments>3</experiments>
</comment>
<comment type="interaction">
    <interactant intactId="EBI-742327">
        <id>Q15654</id>
    </interactant>
    <interactant intactId="EBI-11022007">
        <id>Q9HBE1-4</id>
        <label>PATZ1</label>
    </interactant>
    <organismsDiffer>false</organismsDiffer>
    <experiments>3</experiments>
</comment>
<comment type="interaction">
    <interactant intactId="EBI-742327">
        <id>Q15654</id>
    </interactant>
    <interactant intactId="EBI-641237">
        <id>P09619</id>
        <label>PDGFRB</label>
    </interactant>
    <organismsDiffer>false</organismsDiffer>
    <experiments>3</experiments>
</comment>
<comment type="interaction">
    <interactant intactId="EBI-742327">
        <id>Q15654</id>
    </interactant>
    <interactant intactId="EBI-10178671">
        <id>J3QSH9</id>
        <label>PER1</label>
    </interactant>
    <organismsDiffer>false</organismsDiffer>
    <experiments>3</experiments>
</comment>
<comment type="interaction">
    <interactant intactId="EBI-742327">
        <id>Q15654</id>
    </interactant>
    <interactant intactId="EBI-2908273">
        <id>Q96S52</id>
        <label>PIGS</label>
    </interactant>
    <organismsDiffer>false</organismsDiffer>
    <experiments>3</experiments>
</comment>
<comment type="interaction">
    <interactant intactId="EBI-742327">
        <id>Q15654</id>
    </interactant>
    <interactant intactId="EBI-714158">
        <id>Q13526</id>
        <label>PIN1</label>
    </interactant>
    <organismsDiffer>false</organismsDiffer>
    <experiments>3</experiments>
</comment>
<comment type="interaction">
    <interactant intactId="EBI-742327">
        <id>Q15654</id>
    </interactant>
    <interactant intactId="EBI-12014286">
        <id>Q494U1-3</id>
        <label>PLEKHN1</label>
    </interactant>
    <organismsDiffer>false</organismsDiffer>
    <experiments>3</experiments>
</comment>
<comment type="interaction">
    <interactant intactId="EBI-742327">
        <id>Q15654</id>
    </interactant>
    <interactant intactId="EBI-11956563">
        <id>Q96HA1-2</id>
        <label>POM121</label>
    </interactant>
    <organismsDiffer>false</organismsDiffer>
    <experiments>3</experiments>
</comment>
<comment type="interaction">
    <interactant intactId="EBI-742327">
        <id>Q15654</id>
    </interactant>
    <interactant intactId="EBI-10241319">
        <id>Q3SYA9</id>
        <label>POM121L1P</label>
    </interactant>
    <organismsDiffer>false</organismsDiffer>
    <experiments>3</experiments>
</comment>
<comment type="interaction">
    <interactant intactId="EBI-742327">
        <id>Q15654</id>
    </interactant>
    <interactant intactId="EBI-710402">
        <id>Q96I34</id>
        <label>PPP1R16A</label>
    </interactant>
    <organismsDiffer>false</organismsDiffer>
    <experiments>3</experiments>
</comment>
<comment type="interaction">
    <interactant intactId="EBI-742327">
        <id>Q15654</id>
    </interactant>
    <interactant intactId="EBI-1181405">
        <id>Q13131</id>
        <label>PRKAA1</label>
    </interactant>
    <organismsDiffer>false</organismsDiffer>
    <experiments>3</experiments>
</comment>
<comment type="interaction">
    <interactant intactId="EBI-742327">
        <id>Q15654</id>
    </interactant>
    <interactant intactId="EBI-1383852">
        <id>P54646</id>
        <label>PRKAA2</label>
    </interactant>
    <organismsDiffer>false</organismsDiffer>
    <experiments>3</experiments>
</comment>
<comment type="interaction">
    <interactant intactId="EBI-742327">
        <id>Q15654</id>
    </interactant>
    <interactant intactId="EBI-1237156">
        <id>Q15678</id>
        <label>PTPN14</label>
    </interactant>
    <organismsDiffer>false</organismsDiffer>
    <experiments>3</experiments>
</comment>
<comment type="interaction">
    <interactant intactId="EBI-742327">
        <id>Q15654</id>
    </interactant>
    <interactant intactId="EBI-746453">
        <id>P54725</id>
        <label>RAD23A</label>
    </interactant>
    <organismsDiffer>false</organismsDiffer>
    <experiments>3</experiments>
</comment>
<comment type="interaction">
    <interactant intactId="EBI-742327">
        <id>Q15654</id>
    </interactant>
    <interactant intactId="EBI-12028066">
        <id>Q86VV4</id>
        <label>RANBP3L</label>
    </interactant>
    <organismsDiffer>false</organismsDiffer>
    <experiments>3</experiments>
</comment>
<comment type="interaction">
    <interactant intactId="EBI-742327">
        <id>Q15654</id>
    </interactant>
    <interactant intactId="EBI-742557">
        <id>P48380</id>
        <label>RFX3</label>
    </interactant>
    <organismsDiffer>false</organismsDiffer>
    <experiments>3</experiments>
</comment>
<comment type="interaction">
    <interactant intactId="EBI-742327">
        <id>Q15654</id>
    </interactant>
    <interactant intactId="EBI-446668">
        <id>P61586</id>
        <label>RHOA</label>
    </interactant>
    <organismsDiffer>false</organismsDiffer>
    <experiments>3</experiments>
</comment>
<comment type="interaction">
    <interactant intactId="EBI-742327">
        <id>Q15654</id>
    </interactant>
    <interactant intactId="EBI-10248548">
        <id>Q63HN8-6</id>
        <label>RNF213</label>
    </interactant>
    <organismsDiffer>false</organismsDiffer>
    <experiments>3</experiments>
</comment>
<comment type="interaction">
    <interactant intactId="EBI-742327">
        <id>Q15654</id>
    </interactant>
    <interactant intactId="EBI-3957636">
        <id>Q8IYX7</id>
        <label>SAXO1</label>
    </interactant>
    <organismsDiffer>false</organismsDiffer>
    <experiments>3</experiments>
</comment>
<comment type="interaction">
    <interactant intactId="EBI-742327">
        <id>Q15654</id>
    </interactant>
    <interactant intactId="EBI-745846">
        <id>P57086</id>
        <label>SCAND1</label>
    </interactant>
    <organismsDiffer>false</organismsDiffer>
    <experiments>3</experiments>
</comment>
<comment type="interaction">
    <interactant intactId="EBI-742327">
        <id>Q15654</id>
    </interactant>
    <interactant intactId="EBI-11149962">
        <id>Q15047-3</id>
        <label>SETDB1</label>
    </interactant>
    <organismsDiffer>false</organismsDiffer>
    <experiments>3</experiments>
</comment>
<comment type="interaction">
    <interactant intactId="EBI-742327">
        <id>Q15654</id>
    </interactant>
    <interactant intactId="EBI-12037847">
        <id>Q6ZSJ9</id>
        <label>SHISA6</label>
    </interactant>
    <organismsDiffer>false</organismsDiffer>
    <experiments>3</experiments>
</comment>
<comment type="interaction">
    <interactant intactId="EBI-742327">
        <id>Q15654</id>
    </interactant>
    <interactant intactId="EBI-17172855">
        <id>Q9Y2K2-7</id>
        <label>SIK3</label>
    </interactant>
    <organismsDiffer>false</organismsDiffer>
    <experiments>3</experiments>
</comment>
<comment type="interaction">
    <interactant intactId="EBI-742327">
        <id>Q15654</id>
    </interactant>
    <interactant intactId="EBI-10223741">
        <id>Q05CH4</id>
        <label>SLC15A3</label>
    </interactant>
    <organismsDiffer>false</organismsDiffer>
    <experiments>3</experiments>
</comment>
<comment type="interaction">
    <interactant intactId="EBI-742327">
        <id>Q15654</id>
    </interactant>
    <interactant intactId="EBI-356254">
        <id>P12236</id>
        <label>SLC25A6</label>
    </interactant>
    <organismsDiffer>false</organismsDiffer>
    <experiments>3</experiments>
</comment>
<comment type="interaction">
    <interactant intactId="EBI-742327">
        <id>Q15654</id>
    </interactant>
    <interactant intactId="EBI-2872322">
        <id>Q9H0W8</id>
        <label>SMG9</label>
    </interactant>
    <organismsDiffer>false</organismsDiffer>
    <experiments>3</experiments>
</comment>
<comment type="interaction">
    <interactant intactId="EBI-742327">
        <id>Q15654</id>
    </interactant>
    <interactant intactId="EBI-1045459">
        <id>O95863</id>
        <label>SNAI1</label>
    </interactant>
    <organismsDiffer>false</organismsDiffer>
    <experiments>4</experiments>
</comment>
<comment type="interaction">
    <interactant intactId="EBI-742327">
        <id>Q15654</id>
    </interactant>
    <interactant intactId="EBI-749295">
        <id>O75716</id>
        <label>STK16</label>
    </interactant>
    <organismsDiffer>false</organismsDiffer>
    <experiments>3</experiments>
</comment>
<comment type="interaction">
    <interactant intactId="EBI-742327">
        <id>Q15654</id>
    </interactant>
    <interactant intactId="EBI-8787464">
        <id>Q9NU19</id>
        <label>TBC1D22B</label>
    </interactant>
    <organismsDiffer>false</organismsDiffer>
    <experiments>3</experiments>
</comment>
<comment type="interaction">
    <interactant intactId="EBI-742327">
        <id>Q15654</id>
    </interactant>
    <interactant intactId="EBI-750484">
        <id>Q9Y4C2</id>
        <label>TCAF1</label>
    </interactant>
    <organismsDiffer>false</organismsDiffer>
    <experiments>3</experiments>
</comment>
<comment type="interaction">
    <interactant intactId="EBI-742327">
        <id>Q15654</id>
    </interactant>
    <interactant intactId="EBI-750487">
        <id>Q8WW24</id>
        <label>TEKT4</label>
    </interactant>
    <organismsDiffer>false</organismsDiffer>
    <experiments>4</experiments>
</comment>
<comment type="interaction">
    <interactant intactId="EBI-742327">
        <id>Q15654</id>
    </interactant>
    <interactant intactId="EBI-2256865">
        <id>P35590</id>
        <label>TIE1</label>
    </interactant>
    <organismsDiffer>false</organismsDiffer>
    <experiments>3</experiments>
</comment>
<comment type="interaction">
    <interactant intactId="EBI-742327">
        <id>Q15654</id>
    </interactant>
    <interactant intactId="EBI-11741437">
        <id>Q08117-2</id>
        <label>TLE5</label>
    </interactant>
    <organismsDiffer>false</organismsDiffer>
    <experiments>3</experiments>
</comment>
<comment type="interaction">
    <interactant intactId="EBI-742327">
        <id>Q15654</id>
    </interactant>
    <interactant intactId="EBI-10226570">
        <id>Q0P5Q0</id>
        <label>TMSB4X</label>
    </interactant>
    <organismsDiffer>false</organismsDiffer>
    <experiments>3</experiments>
</comment>
<comment type="interaction">
    <interactant intactId="EBI-742327">
        <id>Q15654</id>
    </interactant>
    <interactant intactId="EBI-10184033">
        <id>Q5VU62</id>
        <label>TPM3</label>
    </interactant>
    <organismsDiffer>false</organismsDiffer>
    <experiments>3</experiments>
</comment>
<comment type="interaction">
    <interactant intactId="EBI-742327">
        <id>Q15654</id>
    </interactant>
    <interactant intactId="EBI-744798">
        <id>O43734</id>
        <label>TRAF3IP2</label>
    </interactant>
    <organismsDiffer>false</organismsDiffer>
    <experiments>3</experiments>
</comment>
<comment type="interaction">
    <interactant intactId="EBI-742327">
        <id>Q15654</id>
    </interactant>
    <interactant intactId="EBI-747601">
        <id>Q9UL33</id>
        <label>TRAPPC2L</label>
    </interactant>
    <organismsDiffer>false</organismsDiffer>
    <experiments>3</experiments>
</comment>
<comment type="interaction">
    <interactant intactId="EBI-742327">
        <id>Q15654</id>
    </interactant>
    <interactant intactId="EBI-702370">
        <id>Q14134</id>
        <label>TRIM29</label>
    </interactant>
    <organismsDiffer>false</organismsDiffer>
    <experiments>3</experiments>
</comment>
<comment type="interaction">
    <interactant intactId="EBI-742327">
        <id>Q15654</id>
    </interactant>
    <interactant intactId="EBI-10241197">
        <id>Q3SY00</id>
        <label>TSGA10IP</label>
    </interactant>
    <organismsDiffer>false</organismsDiffer>
    <experiments>3</experiments>
</comment>
<comment type="interaction">
    <interactant intactId="EBI-742327">
        <id>Q15654</id>
    </interactant>
    <interactant intactId="EBI-3918381">
        <id>Q96PN8</id>
        <label>TSSK3</label>
    </interactant>
    <organismsDiffer>false</organismsDiffer>
    <experiments>3</experiments>
</comment>
<comment type="interaction">
    <interactant intactId="EBI-742327">
        <id>Q15654</id>
    </interactant>
    <interactant intactId="EBI-9090990">
        <id>Q5W5X9-3</id>
        <label>TTC23</label>
    </interactant>
    <organismsDiffer>false</organismsDiffer>
    <experiments>3</experiments>
</comment>
<comment type="interaction">
    <interactant intactId="EBI-742327">
        <id>Q15654</id>
    </interactant>
    <interactant intactId="EBI-7844656">
        <id>Q6ZVT0</id>
        <label>TTLL10</label>
    </interactant>
    <organismsDiffer>false</organismsDiffer>
    <experiments>3</experiments>
</comment>
<comment type="interaction">
    <interactant intactId="EBI-742327">
        <id>Q15654</id>
    </interactant>
    <interactant intactId="EBI-2932492">
        <id>Q99757</id>
        <label>TXN2</label>
    </interactant>
    <organismsDiffer>false</organismsDiffer>
    <experiments>3</experiments>
</comment>
<comment type="interaction">
    <interactant intactId="EBI-742327">
        <id>Q15654</id>
    </interactant>
    <interactant intactId="EBI-2825190">
        <id>Q86UY0</id>
        <label>TXNDC5</label>
    </interactant>
    <organismsDiffer>false</organismsDiffer>
    <experiments>3</experiments>
</comment>
<comment type="interaction">
    <interactant intactId="EBI-742327">
        <id>Q15654</id>
    </interactant>
    <interactant intactId="EBI-743272">
        <id>O75604</id>
        <label>USP2</label>
    </interactant>
    <organismsDiffer>false</organismsDiffer>
    <experiments>3</experiments>
</comment>
<comment type="interaction">
    <interactant intactId="EBI-742327">
        <id>Q15654</id>
    </interactant>
    <interactant intactId="EBI-10249550">
        <id>Q6EMK4</id>
        <label>VASN</label>
    </interactant>
    <organismsDiffer>false</organismsDiffer>
    <experiments>3</experiments>
</comment>
<comment type="interaction">
    <interactant intactId="EBI-742327">
        <id>Q15654</id>
    </interactant>
    <interactant intactId="EBI-10223946">
        <id>Q06250</id>
        <label>WT1-AS</label>
    </interactant>
    <organismsDiffer>false</organismsDiffer>
    <experiments>3</experiments>
</comment>
<comment type="interaction">
    <interactant intactId="EBI-742327">
        <id>Q15654</id>
    </interactant>
    <interactant intactId="EBI-10265517">
        <id>Q8N4L5</id>
        <label>XRCC6BP1</label>
    </interactant>
    <organismsDiffer>false</organismsDiffer>
    <experiments>3</experiments>
</comment>
<comment type="interaction">
    <interactant intactId="EBI-742327">
        <id>Q15654</id>
    </interactant>
    <interactant intactId="EBI-10173066">
        <id>A2RRL9</id>
        <label>ZBP1</label>
    </interactant>
    <organismsDiffer>false</organismsDiffer>
    <experiments>3</experiments>
</comment>
<comment type="interaction">
    <interactant intactId="EBI-742327">
        <id>Q15654</id>
    </interactant>
    <interactant intactId="EBI-11963196">
        <id>Q15915</id>
        <label>ZIC1</label>
    </interactant>
    <organismsDiffer>false</organismsDiffer>
    <experiments>3</experiments>
</comment>
<comment type="interaction">
    <interactant intactId="EBI-742327">
        <id>Q15654</id>
    </interactant>
    <interactant intactId="EBI-3957075">
        <id>Q9H0D2</id>
        <label>ZNF541</label>
    </interactant>
    <organismsDiffer>false</organismsDiffer>
    <experiments>3</experiments>
</comment>
<comment type="interaction">
    <interactant intactId="EBI-742327">
        <id>Q15654</id>
    </interactant>
    <interactant intactId="EBI-746277">
        <id>Q9UK33</id>
        <label>ZNF580</label>
    </interactant>
    <organismsDiffer>false</organismsDiffer>
    <experiments>3</experiments>
</comment>
<comment type="interaction">
    <interactant intactId="EBI-742327">
        <id>Q15654</id>
    </interactant>
    <interactant intactId="EBI-745520">
        <id>Q9P0T4</id>
        <label>ZNF581</label>
    </interactant>
    <organismsDiffer>false</organismsDiffer>
    <experiments>3</experiments>
</comment>
<comment type="interaction">
    <interactant intactId="EBI-742327">
        <id>Q15654</id>
    </interactant>
    <interactant intactId="EBI-16429014">
        <id>A0A0S2Z5X4</id>
        <label>ZNF688</label>
    </interactant>
    <organismsDiffer>false</organismsDiffer>
    <experiments>6</experiments>
</comment>
<comment type="interaction">
    <interactant intactId="EBI-742327">
        <id>Q15654</id>
    </interactant>
    <interactant intactId="EBI-3925400">
        <id>A8K8V0</id>
        <label>ZNF785</label>
    </interactant>
    <organismsDiffer>false</organismsDiffer>
    <experiments>3</experiments>
</comment>
<comment type="interaction">
    <interactant intactId="EBI-742327">
        <id>Q15654</id>
    </interactant>
    <interactant intactId="EBI-10248148">
        <id>Q5W150</id>
    </interactant>
    <organismsDiffer>false</organismsDiffer>
    <experiments>3</experiments>
</comment>
<comment type="interaction">
    <interactant intactId="EBI-742327">
        <id>Q15654</id>
    </interactant>
    <interactant intactId="EBI-10236795">
        <id>Q95HA4</id>
    </interactant>
    <organismsDiffer>false</organismsDiffer>
    <experiments>3</experiments>
</comment>
<comment type="interaction">
    <interactant intactId="EBI-742327">
        <id>Q15654</id>
    </interactant>
    <interactant intactId="EBI-3957603">
        <id>P09022</id>
        <label>Hoxa1</label>
    </interactant>
    <organismsDiffer>true</organismsDiffer>
    <experiments>3</experiments>
</comment>
<comment type="interaction">
    <interactant intactId="EBI-742327">
        <id>Q15654</id>
    </interactant>
    <interactant intactId="EBI-6995105">
        <id>O46385</id>
        <label>SVIL</label>
    </interactant>
    <organismsDiffer>true</organismsDiffer>
    <experiments>5</experiments>
</comment>
<comment type="subcellular location">
    <subcellularLocation>
        <location evidence="11">Cytoplasm</location>
        <location evidence="11">Cytoskeleton</location>
    </subcellularLocation>
    <subcellularLocation>
        <location evidence="11">Cell junction</location>
        <location evidence="11">Focal adhesion</location>
    </subcellularLocation>
    <subcellularLocation>
        <location evidence="5 11">Nucleus</location>
    </subcellularLocation>
    <subcellularLocation>
        <location evidence="11">Cytoplasm</location>
    </subcellularLocation>
    <text evidence="5 11">Shuttles between nucleus and cytoplasm (PubMed:16624523). Colocalizes with actin (PubMed:10826496).</text>
</comment>
<comment type="alternative products">
    <event type="alternative splicing"/>
    <isoform>
        <id>Q15654-1</id>
        <name>1</name>
        <sequence type="displayed"/>
    </isoform>
    <isoform>
        <id>Q15654-2</id>
        <name>2</name>
        <sequence type="described" ref="VSP_047621 VSP_047624"/>
    </isoform>
    <isoform>
        <id>Q15654-3</id>
        <name>3</name>
        <sequence type="described" ref="VSP_047622 VSP_047623"/>
    </isoform>
</comment>
<comment type="tissue specificity">
    <text evidence="15">Abundantly expressed in kidney, liver and lung. Lower levels in heart, placenta and pancreas. Expressed in colonic epithelial cells. Up-regulated in colonic tumors.</text>
</comment>
<comment type="domain">
    <text>The LIM zinc-binding domains mediate interaction with LPAR2 and with S.typhimurium protein sseI.</text>
</comment>
<comment type="PTM">
    <text evidence="9 14">Phosphorylation at Tyr-55 by SRC is required for enhancement of lysophosphatidic acid-induced cell migration. Tyr-55 is dephosphorylated by PTPN13.</text>
</comment>
<comment type="similarity">
    <text evidence="17">Belongs to the zyxin/ajuba family.</text>
</comment>
<comment type="sequence caution" evidence="17">
    <conflict type="frameshift">
        <sequence resource="EMBL-CDS" id="AAC41740"/>
    </conflict>
</comment>
<feature type="chain" id="PRO_0000075908" description="Thyroid receptor-interacting protein 6">
    <location>
        <begin position="1"/>
        <end position="476"/>
    </location>
</feature>
<feature type="domain" description="LIM zinc-binding 1" evidence="2">
    <location>
        <begin position="279"/>
        <end position="316"/>
    </location>
</feature>
<feature type="domain" description="LIM zinc-binding 2" evidence="2">
    <location>
        <begin position="339"/>
        <end position="398"/>
    </location>
</feature>
<feature type="domain" description="LIM zinc-binding 3" evidence="2">
    <location>
        <begin position="399"/>
        <end position="467"/>
    </location>
</feature>
<feature type="region of interest" description="Disordered" evidence="3">
    <location>
        <begin position="1"/>
        <end position="93"/>
    </location>
</feature>
<feature type="region of interest" description="Disordered" evidence="3">
    <location>
        <begin position="108"/>
        <end position="253"/>
    </location>
</feature>
<feature type="region of interest" description="Interaction with MAGI1 and PTPN13" evidence="15">
    <location>
        <begin position="469"/>
        <end position="476"/>
    </location>
</feature>
<feature type="compositionally biased region" description="Pro residues" evidence="3">
    <location>
        <begin position="1"/>
        <end position="12"/>
    </location>
</feature>
<feature type="compositionally biased region" description="Low complexity" evidence="3">
    <location>
        <begin position="152"/>
        <end position="167"/>
    </location>
</feature>
<feature type="modified residue" description="Asymmetric dimethylarginine; alternate" evidence="1">
    <location>
        <position position="25"/>
    </location>
</feature>
<feature type="modified residue" description="Omega-N-methylarginine; alternate" evidence="22">
    <location>
        <position position="25"/>
    </location>
</feature>
<feature type="modified residue" description="Phosphotyrosine; by SRC" evidence="9 14">
    <location>
        <position position="55"/>
    </location>
</feature>
<feature type="modified residue" description="Phosphoserine" evidence="18 20">
    <location>
        <position position="92"/>
    </location>
</feature>
<feature type="modified residue" description="Omega-N-methylarginine" evidence="22">
    <location>
        <position position="111"/>
    </location>
</feature>
<feature type="modified residue" description="Phosphoserine" evidence="19 21">
    <location>
        <position position="142"/>
    </location>
</feature>
<feature type="modified residue" description="Omega-N-methylarginine" evidence="22">
    <location>
        <position position="179"/>
    </location>
</feature>
<feature type="modified residue" description="Omega-N-methylarginine" evidence="22">
    <location>
        <position position="186"/>
    </location>
</feature>
<feature type="modified residue" description="Phosphoserine" evidence="21">
    <location>
        <position position="189"/>
    </location>
</feature>
<feature type="modified residue" description="Omega-N-methylarginine" evidence="22">
    <location>
        <position position="205"/>
    </location>
</feature>
<feature type="modified residue" description="Omega-N-methylarginine" evidence="22">
    <location>
        <position position="236"/>
    </location>
</feature>
<feature type="modified residue" description="Omega-N-methylarginine" evidence="22">
    <location>
        <position position="238"/>
    </location>
</feature>
<feature type="modified residue" description="Phosphoserine" evidence="21">
    <location>
        <position position="249"/>
    </location>
</feature>
<feature type="splice variant" id="VSP_047621" description="In isoform 2." evidence="16">
    <original>ALQPHPRVNFCPLPSEQCYQAPGGPEDRGPAWVGSHGVLQHTQGLPADRGGLRPGSLDAEIDLLSSTLAE</original>
    <variation>VLPGPRGTGGSGAGVGGVPWSTPAHAGAPCRQGGPSPWKPGRRDRLAEQHAGRAEWGSGSCVTATRPTGI</variation>
    <location>
        <begin position="37"/>
        <end position="106"/>
    </location>
</feature>
<feature type="splice variant" id="VSP_047622" description="In isoform 3." evidence="17">
    <original>ALQPHPRVNFCPLPSEQCYQAPGGPEDRGPAWVGSHGVLQHTQG</original>
    <variation>GAPCRQGGPSPWKPGRRDRLAEQHAGRAEWGSGSCVTATRPTGI</variation>
    <location>
        <begin position="37"/>
        <end position="80"/>
    </location>
</feature>
<feature type="splice variant" id="VSP_047623" description="In isoform 3." evidence="17">
    <location>
        <begin position="81"/>
        <end position="476"/>
    </location>
</feature>
<feature type="splice variant" id="VSP_047624" description="In isoform 2." evidence="16">
    <location>
        <begin position="107"/>
        <end position="476"/>
    </location>
</feature>
<feature type="sequence variant" id="VAR_062262" description="In dbSNP:rs2437100." evidence="8">
    <original>R</original>
    <variation>Q</variation>
    <location>
        <position position="111"/>
    </location>
</feature>
<feature type="sequence variant" id="VAR_050171" description="In dbSNP:rs2075756." evidence="8">
    <original>V</original>
    <variation>I</variation>
    <location>
        <position position="230"/>
    </location>
</feature>
<feature type="sequence variant" id="VAR_013309" description="In dbSNP:rs17855370." evidence="8">
    <original>L</original>
    <variation>F</variation>
    <location>
        <position position="296"/>
    </location>
</feature>
<feature type="mutagenesis site" description="Exclusively located in nucleus." evidence="11">
    <original>S</original>
    <variation>A</variation>
    <location>
        <position position="101"/>
    </location>
</feature>
<feature type="mutagenesis site" description="Exclusively located in nucleus." evidence="11">
    <original>S</original>
    <variation>A</variation>
    <location>
        <position position="102"/>
    </location>
</feature>
<feature type="mutagenesis site" description="Reduces interaction with MAGI1." evidence="15">
    <original>T</original>
    <variation>A</variation>
    <location>
        <position position="474"/>
    </location>
</feature>
<feature type="sequence conflict" description="In Ref. 9; AAH02680." evidence="17" ref="9">
    <location>
        <begin position="39"/>
        <end position="40"/>
    </location>
</feature>
<feature type="sequence conflict" description="In Ref. 2; AAB62222." evidence="17" ref="2">
    <original>S</original>
    <variation>T</variation>
    <location>
        <position position="102"/>
    </location>
</feature>
<feature type="sequence conflict" description="In Ref. 2; AAB62222." evidence="17" ref="2">
    <original>E</original>
    <variation>K</variation>
    <location>
        <position position="106"/>
    </location>
</feature>
<feature type="sequence conflict" description="In Ref. 1; CAA05080." evidence="17" ref="1">
    <original>S</original>
    <variation>C</variation>
    <location>
        <position position="135"/>
    </location>
</feature>
<feature type="sequence conflict" description="In Ref. 10; AAC41740." evidence="17" ref="10">
    <original>CRAQ</original>
    <variation>MPGP</variation>
    <location>
        <begin position="310"/>
        <end position="313"/>
    </location>
</feature>
<feature type="strand" evidence="23">
    <location>
        <begin position="280"/>
        <end position="282"/>
    </location>
</feature>
<feature type="strand" evidence="23">
    <location>
        <begin position="288"/>
        <end position="290"/>
    </location>
</feature>
<feature type="strand" evidence="23">
    <location>
        <begin position="296"/>
        <end position="300"/>
    </location>
</feature>
<feature type="turn" evidence="23">
    <location>
        <begin position="302"/>
        <end position="304"/>
    </location>
</feature>
<feature type="strand" evidence="23">
    <location>
        <begin position="308"/>
        <end position="310"/>
    </location>
</feature>
<feature type="strand" evidence="23">
    <location>
        <begin position="319"/>
        <end position="324"/>
    </location>
</feature>
<feature type="strand" evidence="23">
    <location>
        <begin position="326"/>
        <end position="328"/>
    </location>
</feature>
<feature type="helix" evidence="23">
    <location>
        <begin position="329"/>
        <end position="337"/>
    </location>
</feature>
<feature type="turn" evidence="24">
    <location>
        <begin position="340"/>
        <end position="342"/>
    </location>
</feature>
<feature type="strand" evidence="24">
    <location>
        <begin position="351"/>
        <end position="353"/>
    </location>
</feature>
<feature type="strand" evidence="24">
    <location>
        <begin position="356"/>
        <end position="358"/>
    </location>
</feature>
<feature type="turn" evidence="24">
    <location>
        <begin position="360"/>
        <end position="362"/>
    </location>
</feature>
<feature type="strand" evidence="24">
    <location>
        <begin position="366"/>
        <end position="368"/>
    </location>
</feature>
<feature type="helix" evidence="24">
    <location>
        <begin position="388"/>
        <end position="394"/>
    </location>
</feature>
<dbReference type="EMBL" id="AJ001902">
    <property type="protein sequence ID" value="CAA05080.1"/>
    <property type="molecule type" value="mRNA"/>
</dbReference>
<dbReference type="EMBL" id="AF000974">
    <property type="protein sequence ID" value="AAB62222.1"/>
    <property type="molecule type" value="mRNA"/>
</dbReference>
<dbReference type="EMBL" id="AF093836">
    <property type="protein sequence ID" value="AAD03037.1"/>
    <property type="molecule type" value="Genomic_DNA"/>
</dbReference>
<dbReference type="EMBL" id="AF093834">
    <property type="protein sequence ID" value="AAD03037.1"/>
    <property type="status" value="JOINED"/>
    <property type="molecule type" value="Genomic_DNA"/>
</dbReference>
<dbReference type="EMBL" id="AF093835">
    <property type="protein sequence ID" value="AAD03037.1"/>
    <property type="status" value="JOINED"/>
    <property type="molecule type" value="Genomic_DNA"/>
</dbReference>
<dbReference type="EMBL" id="AF312032">
    <property type="protein sequence ID" value="AAK21007.1"/>
    <property type="molecule type" value="Genomic_DNA"/>
</dbReference>
<dbReference type="EMBL" id="AB628086">
    <property type="protein sequence ID" value="BAK20497.1"/>
    <property type="molecule type" value="mRNA"/>
</dbReference>
<dbReference type="EMBL" id="AB628087">
    <property type="protein sequence ID" value="BAK20498.1"/>
    <property type="molecule type" value="mRNA"/>
</dbReference>
<dbReference type="EMBL" id="AK291906">
    <property type="protein sequence ID" value="BAF84595.1"/>
    <property type="molecule type" value="mRNA"/>
</dbReference>
<dbReference type="EMBL" id="AC011895">
    <property type="status" value="NOT_ANNOTATED_CDS"/>
    <property type="molecule type" value="Genomic_DNA"/>
</dbReference>
<dbReference type="EMBL" id="CH236956">
    <property type="protein sequence ID" value="EAL23817.1"/>
    <property type="molecule type" value="Genomic_DNA"/>
</dbReference>
<dbReference type="EMBL" id="CH471091">
    <property type="protein sequence ID" value="EAW76472.1"/>
    <property type="molecule type" value="Genomic_DNA"/>
</dbReference>
<dbReference type="EMBL" id="BC002680">
    <property type="protein sequence ID" value="AAH02680.1"/>
    <property type="molecule type" value="mRNA"/>
</dbReference>
<dbReference type="EMBL" id="BC004249">
    <property type="protein sequence ID" value="AAH04249.1"/>
    <property type="molecule type" value="mRNA"/>
</dbReference>
<dbReference type="EMBL" id="BC004999">
    <property type="protein sequence ID" value="AAH04999.1"/>
    <property type="molecule type" value="mRNA"/>
</dbReference>
<dbReference type="EMBL" id="BC021540">
    <property type="protein sequence ID" value="AAH21540.1"/>
    <property type="molecule type" value="mRNA"/>
</dbReference>
<dbReference type="EMBL" id="BC028985">
    <property type="protein sequence ID" value="AAH28985.1"/>
    <property type="molecule type" value="mRNA"/>
</dbReference>
<dbReference type="EMBL" id="L40374">
    <property type="protein sequence ID" value="AAC41740.1"/>
    <property type="status" value="ALT_FRAME"/>
    <property type="molecule type" value="mRNA"/>
</dbReference>
<dbReference type="CCDS" id="CCDS5708.1">
    <molecule id="Q15654-1"/>
</dbReference>
<dbReference type="RefSeq" id="NP_003293.2">
    <molecule id="Q15654-1"/>
    <property type="nucleotide sequence ID" value="NM_003302.3"/>
</dbReference>
<dbReference type="PDB" id="1X61">
    <property type="method" value="NMR"/>
    <property type="chains" value="A=279-337"/>
</dbReference>
<dbReference type="PDB" id="2DLO">
    <property type="method" value="NMR"/>
    <property type="chains" value="A=329-396"/>
</dbReference>
<dbReference type="PDBsum" id="1X61"/>
<dbReference type="PDBsum" id="2DLO"/>
<dbReference type="SMR" id="Q15654"/>
<dbReference type="BioGRID" id="113056">
    <property type="interactions" value="371"/>
</dbReference>
<dbReference type="CORUM" id="Q15654"/>
<dbReference type="DIP" id="DIP-34466N"/>
<dbReference type="FunCoup" id="Q15654">
    <property type="interactions" value="1104"/>
</dbReference>
<dbReference type="IntAct" id="Q15654">
    <property type="interactions" value="263"/>
</dbReference>
<dbReference type="MINT" id="Q15654"/>
<dbReference type="STRING" id="9606.ENSP00000200457"/>
<dbReference type="GlyGen" id="Q15654">
    <property type="glycosylation" value="3 sites, 1 O-linked glycan (3 sites)"/>
</dbReference>
<dbReference type="iPTMnet" id="Q15654"/>
<dbReference type="PhosphoSitePlus" id="Q15654"/>
<dbReference type="BioMuta" id="TRIP6"/>
<dbReference type="DMDM" id="20981729"/>
<dbReference type="jPOST" id="Q15654"/>
<dbReference type="MassIVE" id="Q15654"/>
<dbReference type="PaxDb" id="9606-ENSP00000200457"/>
<dbReference type="PeptideAtlas" id="Q15654"/>
<dbReference type="ProteomicsDB" id="24045"/>
<dbReference type="ProteomicsDB" id="24046"/>
<dbReference type="ProteomicsDB" id="60696">
    <molecule id="Q15654-1"/>
</dbReference>
<dbReference type="Pumba" id="Q15654"/>
<dbReference type="Antibodypedia" id="16676">
    <property type="antibodies" value="403 antibodies from 37 providers"/>
</dbReference>
<dbReference type="DNASU" id="7205"/>
<dbReference type="Ensembl" id="ENST00000200457.9">
    <molecule id="Q15654-1"/>
    <property type="protein sequence ID" value="ENSP00000200457.4"/>
    <property type="gene ID" value="ENSG00000087077.14"/>
</dbReference>
<dbReference type="Ensembl" id="ENST00000417475.5">
    <molecule id="Q15654-2"/>
    <property type="protein sequence ID" value="ENSP00000413817.1"/>
    <property type="gene ID" value="ENSG00000087077.14"/>
</dbReference>
<dbReference type="Ensembl" id="ENST00000437505.5">
    <molecule id="Q15654-3"/>
    <property type="protein sequence ID" value="ENSP00000410736.1"/>
    <property type="gene ID" value="ENSG00000087077.14"/>
</dbReference>
<dbReference type="Ensembl" id="ENST00000619988.4">
    <molecule id="Q15654-3"/>
    <property type="protein sequence ID" value="ENSP00000479865.1"/>
    <property type="gene ID" value="ENSG00000087077.14"/>
</dbReference>
<dbReference type="GeneID" id="7205"/>
<dbReference type="KEGG" id="hsa:7205"/>
<dbReference type="MANE-Select" id="ENST00000200457.9">
    <property type="protein sequence ID" value="ENSP00000200457.4"/>
    <property type="RefSeq nucleotide sequence ID" value="NM_003302.3"/>
    <property type="RefSeq protein sequence ID" value="NP_003293.2"/>
</dbReference>
<dbReference type="UCSC" id="uc003uww.4">
    <molecule id="Q15654-1"/>
    <property type="organism name" value="human"/>
</dbReference>
<dbReference type="AGR" id="HGNC:12311"/>
<dbReference type="CTD" id="7205"/>
<dbReference type="DisGeNET" id="7205"/>
<dbReference type="GeneCards" id="TRIP6"/>
<dbReference type="HGNC" id="HGNC:12311">
    <property type="gene designation" value="TRIP6"/>
</dbReference>
<dbReference type="HPA" id="ENSG00000087077">
    <property type="expression patterns" value="Low tissue specificity"/>
</dbReference>
<dbReference type="MIM" id="602933">
    <property type="type" value="gene"/>
</dbReference>
<dbReference type="neXtProt" id="NX_Q15654"/>
<dbReference type="OpenTargets" id="ENSG00000087077"/>
<dbReference type="PharmGKB" id="PA36989"/>
<dbReference type="VEuPathDB" id="HostDB:ENSG00000087077"/>
<dbReference type="eggNOG" id="KOG1701">
    <property type="taxonomic scope" value="Eukaryota"/>
</dbReference>
<dbReference type="GeneTree" id="ENSGT00940000154273"/>
<dbReference type="HOGENOM" id="CLU_001357_10_1_1"/>
<dbReference type="InParanoid" id="Q15654"/>
<dbReference type="OMA" id="DRGCLRP"/>
<dbReference type="OrthoDB" id="25414at2759"/>
<dbReference type="PAN-GO" id="Q15654">
    <property type="GO annotations" value="5 GO annotations based on evolutionary models"/>
</dbReference>
<dbReference type="PhylomeDB" id="Q15654"/>
<dbReference type="TreeFam" id="TF320310"/>
<dbReference type="PathwayCommons" id="Q15654"/>
<dbReference type="SignaLink" id="Q15654"/>
<dbReference type="SIGNOR" id="Q15654"/>
<dbReference type="BioGRID-ORCS" id="7205">
    <property type="hits" value="73 hits in 1156 CRISPR screens"/>
</dbReference>
<dbReference type="CD-CODE" id="DEE660B4">
    <property type="entry name" value="Stress granule"/>
</dbReference>
<dbReference type="ChiTaRS" id="TRIP6">
    <property type="organism name" value="human"/>
</dbReference>
<dbReference type="EvolutionaryTrace" id="Q15654"/>
<dbReference type="GeneWiki" id="TRIP6"/>
<dbReference type="GenomeRNAi" id="7205"/>
<dbReference type="Pharos" id="Q15654">
    <property type="development level" value="Tbio"/>
</dbReference>
<dbReference type="PRO" id="PR:Q15654"/>
<dbReference type="Proteomes" id="UP000005640">
    <property type="component" value="Chromosome 7"/>
</dbReference>
<dbReference type="RNAct" id="Q15654">
    <property type="molecule type" value="protein"/>
</dbReference>
<dbReference type="Bgee" id="ENSG00000087077">
    <property type="expression patterns" value="Expressed in endometrium epithelium and 203 other cell types or tissues"/>
</dbReference>
<dbReference type="ExpressionAtlas" id="Q15654">
    <property type="expression patterns" value="baseline and differential"/>
</dbReference>
<dbReference type="GO" id="GO:0005737">
    <property type="term" value="C:cytoplasm"/>
    <property type="evidence" value="ECO:0000318"/>
    <property type="project" value="GO_Central"/>
</dbReference>
<dbReference type="GO" id="GO:0005856">
    <property type="term" value="C:cytoskeleton"/>
    <property type="evidence" value="ECO:0000314"/>
    <property type="project" value="UniProtKB"/>
</dbReference>
<dbReference type="GO" id="GO:0005829">
    <property type="term" value="C:cytosol"/>
    <property type="evidence" value="ECO:0000314"/>
    <property type="project" value="HPA"/>
</dbReference>
<dbReference type="GO" id="GO:0005925">
    <property type="term" value="C:focal adhesion"/>
    <property type="evidence" value="ECO:0000314"/>
    <property type="project" value="HPA"/>
</dbReference>
<dbReference type="GO" id="GO:0005634">
    <property type="term" value="C:nucleus"/>
    <property type="evidence" value="ECO:0000314"/>
    <property type="project" value="UniProtKB"/>
</dbReference>
<dbReference type="GO" id="GO:0005886">
    <property type="term" value="C:plasma membrane"/>
    <property type="evidence" value="ECO:0000314"/>
    <property type="project" value="HPA"/>
</dbReference>
<dbReference type="GO" id="GO:0001725">
    <property type="term" value="C:stress fiber"/>
    <property type="evidence" value="ECO:0000318"/>
    <property type="project" value="GO_Central"/>
</dbReference>
<dbReference type="GO" id="GO:0005149">
    <property type="term" value="F:interleukin-1 receptor binding"/>
    <property type="evidence" value="ECO:0000314"/>
    <property type="project" value="UniProtKB"/>
</dbReference>
<dbReference type="GO" id="GO:0019900">
    <property type="term" value="F:kinase binding"/>
    <property type="evidence" value="ECO:0000353"/>
    <property type="project" value="UniProtKB"/>
</dbReference>
<dbReference type="GO" id="GO:0046872">
    <property type="term" value="F:metal ion binding"/>
    <property type="evidence" value="ECO:0007669"/>
    <property type="project" value="UniProtKB-KW"/>
</dbReference>
<dbReference type="GO" id="GO:0046966">
    <property type="term" value="F:nuclear thyroid hormone receptor binding"/>
    <property type="evidence" value="ECO:0000303"/>
    <property type="project" value="UniProtKB"/>
</dbReference>
<dbReference type="GO" id="GO:0003723">
    <property type="term" value="F:RNA binding"/>
    <property type="evidence" value="ECO:0007005"/>
    <property type="project" value="UniProtKB"/>
</dbReference>
<dbReference type="GO" id="GO:0043009">
    <property type="term" value="P:chordate embryonic development"/>
    <property type="evidence" value="ECO:0007669"/>
    <property type="project" value="Ensembl"/>
</dbReference>
<dbReference type="GO" id="GO:0048041">
    <property type="term" value="P:focal adhesion assembly"/>
    <property type="evidence" value="ECO:0000303"/>
    <property type="project" value="UniProtKB"/>
</dbReference>
<dbReference type="GO" id="GO:0030335">
    <property type="term" value="P:positive regulation of cell migration"/>
    <property type="evidence" value="ECO:0000315"/>
    <property type="project" value="UniProtKB"/>
</dbReference>
<dbReference type="GO" id="GO:1901224">
    <property type="term" value="P:positive regulation of non-canonical NF-kappaB signal transduction"/>
    <property type="evidence" value="ECO:0000314"/>
    <property type="project" value="UniProtKB"/>
</dbReference>
<dbReference type="GO" id="GO:0007165">
    <property type="term" value="P:signal transduction"/>
    <property type="evidence" value="ECO:0000318"/>
    <property type="project" value="GO_Central"/>
</dbReference>
<dbReference type="CDD" id="cd09350">
    <property type="entry name" value="LIM1_TRIP6"/>
    <property type="match status" value="1"/>
</dbReference>
<dbReference type="CDD" id="cd09357">
    <property type="entry name" value="LIM3_Zyxin_like"/>
    <property type="match status" value="1"/>
</dbReference>
<dbReference type="FunFam" id="2.10.110.10:FF:000027">
    <property type="entry name" value="lipoma-preferred partner isoform X1"/>
    <property type="match status" value="1"/>
</dbReference>
<dbReference type="FunFam" id="2.10.110.10:FF:000042">
    <property type="entry name" value="lipoma-preferred partner isoform X1"/>
    <property type="match status" value="1"/>
</dbReference>
<dbReference type="FunFam" id="2.10.110.10:FF:000047">
    <property type="entry name" value="lipoma-preferred partner isoform X1"/>
    <property type="match status" value="1"/>
</dbReference>
<dbReference type="Gene3D" id="2.10.110.10">
    <property type="entry name" value="Cysteine Rich Protein"/>
    <property type="match status" value="3"/>
</dbReference>
<dbReference type="InterPro" id="IPR001781">
    <property type="entry name" value="Znf_LIM"/>
</dbReference>
<dbReference type="PANTHER" id="PTHR24212:SF7">
    <property type="entry name" value="THYROID RECEPTOR-INTERACTING PROTEIN 6"/>
    <property type="match status" value="1"/>
</dbReference>
<dbReference type="PANTHER" id="PTHR24212">
    <property type="entry name" value="ZYXIN/TRIP6"/>
    <property type="match status" value="1"/>
</dbReference>
<dbReference type="Pfam" id="PF00412">
    <property type="entry name" value="LIM"/>
    <property type="match status" value="3"/>
</dbReference>
<dbReference type="SMART" id="SM00132">
    <property type="entry name" value="LIM"/>
    <property type="match status" value="3"/>
</dbReference>
<dbReference type="SUPFAM" id="SSF57716">
    <property type="entry name" value="Glucocorticoid receptor-like (DNA-binding domain)"/>
    <property type="match status" value="3"/>
</dbReference>
<dbReference type="PROSITE" id="PS00478">
    <property type="entry name" value="LIM_DOMAIN_1"/>
    <property type="match status" value="2"/>
</dbReference>
<dbReference type="PROSITE" id="PS50023">
    <property type="entry name" value="LIM_DOMAIN_2"/>
    <property type="match status" value="3"/>
</dbReference>
<gene>
    <name type="primary">TRIP6</name>
    <name type="synonym">OIP1</name>
</gene>
<accession>Q15654</accession>
<accession>A4D2E7</accession>
<accession>F2ZC07</accession>
<accession>F2ZC08</accession>
<accession>O15170</accession>
<accession>O15275</accession>
<accession>Q9BTB2</accession>
<accession>Q9BUE5</accession>
<accession>Q9BXP3</accession>
<accession>Q9UNT4</accession>
<name>TRIP6_HUMAN</name>
<evidence type="ECO:0000250" key="1">
    <source>
        <dbReference type="UniProtKB" id="Q9Z1Y4"/>
    </source>
</evidence>
<evidence type="ECO:0000255" key="2">
    <source>
        <dbReference type="PROSITE-ProRule" id="PRU00125"/>
    </source>
</evidence>
<evidence type="ECO:0000256" key="3">
    <source>
        <dbReference type="SAM" id="MobiDB-lite"/>
    </source>
</evidence>
<evidence type="ECO:0000269" key="4">
    <source>
    </source>
</evidence>
<evidence type="ECO:0000269" key="5">
    <source>
    </source>
</evidence>
<evidence type="ECO:0000269" key="6">
    <source>
    </source>
</evidence>
<evidence type="ECO:0000269" key="7">
    <source>
    </source>
</evidence>
<evidence type="ECO:0000269" key="8">
    <source>
    </source>
</evidence>
<evidence type="ECO:0000269" key="9">
    <source>
    </source>
</evidence>
<evidence type="ECO:0000269" key="10">
    <source>
    </source>
</evidence>
<evidence type="ECO:0000269" key="11">
    <source>
    </source>
</evidence>
<evidence type="ECO:0000269" key="12">
    <source>
    </source>
</evidence>
<evidence type="ECO:0000269" key="13">
    <source>
    </source>
</evidence>
<evidence type="ECO:0000269" key="14">
    <source>
    </source>
</evidence>
<evidence type="ECO:0000269" key="15">
    <source>
    </source>
</evidence>
<evidence type="ECO:0000303" key="16">
    <source ref="4"/>
</evidence>
<evidence type="ECO:0000305" key="17"/>
<evidence type="ECO:0007744" key="18">
    <source>
    </source>
</evidence>
<evidence type="ECO:0007744" key="19">
    <source>
    </source>
</evidence>
<evidence type="ECO:0007744" key="20">
    <source>
    </source>
</evidence>
<evidence type="ECO:0007744" key="21">
    <source>
    </source>
</evidence>
<evidence type="ECO:0007744" key="22">
    <source>
    </source>
</evidence>
<evidence type="ECO:0007829" key="23">
    <source>
        <dbReference type="PDB" id="1X61"/>
    </source>
</evidence>
<evidence type="ECO:0007829" key="24">
    <source>
        <dbReference type="PDB" id="2DLO"/>
    </source>
</evidence>
<proteinExistence type="evidence at protein level"/>
<reference key="1">
    <citation type="journal article" date="1998" name="Genomics">
        <title>The human TRIP6 gene encodes a LIM domain protein and maps to chromosome 7q22, a region associated with tumorigenesis.</title>
        <authorList>
            <person name="Yi J."/>
            <person name="Beckerle M.C."/>
        </authorList>
    </citation>
    <scope>NUCLEOTIDE SEQUENCE [MRNA] (ISOFORM 1)</scope>
</reference>
<reference key="2">
    <citation type="journal article" date="1999" name="J. Biol. Chem.">
        <title>ZRP-1, a zyxin-related protein, interacts with the second PDZ domain of the cytosolic protein tyrosine phosphatase hPTP1E.</title>
        <authorList>
            <person name="Murthy K.K."/>
            <person name="Clark K."/>
            <person name="Fortin Y."/>
            <person name="Shen S.-H."/>
            <person name="Banville D."/>
        </authorList>
    </citation>
    <scope>NUCLEOTIDE SEQUENCE [GENOMIC DNA / MRNA] (ISOFORM 1)</scope>
    <scope>INTERACTION WITH PTPN13</scope>
</reference>
<reference key="3">
    <citation type="journal article" date="2001" name="Nucleic Acids Res.">
        <title>Comparative analysis of the gene-dense ACHE/TFR2 region on human chromosome 7q22 with the orthologous region on mouse chromosome 5.</title>
        <authorList>
            <person name="Wilson M.D."/>
            <person name="Riemer C."/>
            <person name="Martindale D.W."/>
            <person name="Schnupf P."/>
            <person name="Boright A.P."/>
            <person name="Cheung T.L."/>
            <person name="Hardy D.M."/>
            <person name="Schwartz S."/>
            <person name="Scherer S.W."/>
            <person name="Tsui L.-C."/>
            <person name="Miller W."/>
            <person name="Koop B.F."/>
        </authorList>
    </citation>
    <scope>NUCLEOTIDE SEQUENCE [GENOMIC DNA]</scope>
</reference>
<reference key="4">
    <citation type="submission" date="2011-05" db="EMBL/GenBank/DDBJ databases">
        <title>Identification and characterization of novel isoforms of human TRIP6.</title>
        <authorList>
            <person name="Kojima H."/>
            <person name="Masuhiro Y."/>
            <person name="Hanazawa S."/>
        </authorList>
    </citation>
    <scope>NUCLEOTIDE SEQUENCE [MRNA] (ISOFORM 2)</scope>
</reference>
<reference key="5">
    <citation type="journal article" date="2004" name="Nat. Genet.">
        <title>Complete sequencing and characterization of 21,243 full-length human cDNAs.</title>
        <authorList>
            <person name="Ota T."/>
            <person name="Suzuki Y."/>
            <person name="Nishikawa T."/>
            <person name="Otsuki T."/>
            <person name="Sugiyama T."/>
            <person name="Irie R."/>
            <person name="Wakamatsu A."/>
            <person name="Hayashi K."/>
            <person name="Sato H."/>
            <person name="Nagai K."/>
            <person name="Kimura K."/>
            <person name="Makita H."/>
            <person name="Sekine M."/>
            <person name="Obayashi M."/>
            <person name="Nishi T."/>
            <person name="Shibahara T."/>
            <person name="Tanaka T."/>
            <person name="Ishii S."/>
            <person name="Yamamoto J."/>
            <person name="Saito K."/>
            <person name="Kawai Y."/>
            <person name="Isono Y."/>
            <person name="Nakamura Y."/>
            <person name="Nagahari K."/>
            <person name="Murakami K."/>
            <person name="Yasuda T."/>
            <person name="Iwayanagi T."/>
            <person name="Wagatsuma M."/>
            <person name="Shiratori A."/>
            <person name="Sudo H."/>
            <person name="Hosoiri T."/>
            <person name="Kaku Y."/>
            <person name="Kodaira H."/>
            <person name="Kondo H."/>
            <person name="Sugawara M."/>
            <person name="Takahashi M."/>
            <person name="Kanda K."/>
            <person name="Yokoi T."/>
            <person name="Furuya T."/>
            <person name="Kikkawa E."/>
            <person name="Omura Y."/>
            <person name="Abe K."/>
            <person name="Kamihara K."/>
            <person name="Katsuta N."/>
            <person name="Sato K."/>
            <person name="Tanikawa M."/>
            <person name="Yamazaki M."/>
            <person name="Ninomiya K."/>
            <person name="Ishibashi T."/>
            <person name="Yamashita H."/>
            <person name="Murakawa K."/>
            <person name="Fujimori K."/>
            <person name="Tanai H."/>
            <person name="Kimata M."/>
            <person name="Watanabe M."/>
            <person name="Hiraoka S."/>
            <person name="Chiba Y."/>
            <person name="Ishida S."/>
            <person name="Ono Y."/>
            <person name="Takiguchi S."/>
            <person name="Watanabe S."/>
            <person name="Yosida M."/>
            <person name="Hotuta T."/>
            <person name="Kusano J."/>
            <person name="Kanehori K."/>
            <person name="Takahashi-Fujii A."/>
            <person name="Hara H."/>
            <person name="Tanase T.-O."/>
            <person name="Nomura Y."/>
            <person name="Togiya S."/>
            <person name="Komai F."/>
            <person name="Hara R."/>
            <person name="Takeuchi K."/>
            <person name="Arita M."/>
            <person name="Imose N."/>
            <person name="Musashino K."/>
            <person name="Yuuki H."/>
            <person name="Oshima A."/>
            <person name="Sasaki N."/>
            <person name="Aotsuka S."/>
            <person name="Yoshikawa Y."/>
            <person name="Matsunawa H."/>
            <person name="Ichihara T."/>
            <person name="Shiohata N."/>
            <person name="Sano S."/>
            <person name="Moriya S."/>
            <person name="Momiyama H."/>
            <person name="Satoh N."/>
            <person name="Takami S."/>
            <person name="Terashima Y."/>
            <person name="Suzuki O."/>
            <person name="Nakagawa S."/>
            <person name="Senoh A."/>
            <person name="Mizoguchi H."/>
            <person name="Goto Y."/>
            <person name="Shimizu F."/>
            <person name="Wakebe H."/>
            <person name="Hishigaki H."/>
            <person name="Watanabe T."/>
            <person name="Sugiyama A."/>
            <person name="Takemoto M."/>
            <person name="Kawakami B."/>
            <person name="Yamazaki M."/>
            <person name="Watanabe K."/>
            <person name="Kumagai A."/>
            <person name="Itakura S."/>
            <person name="Fukuzumi Y."/>
            <person name="Fujimori Y."/>
            <person name="Komiyama M."/>
            <person name="Tashiro H."/>
            <person name="Tanigami A."/>
            <person name="Fujiwara T."/>
            <person name="Ono T."/>
            <person name="Yamada K."/>
            <person name="Fujii Y."/>
            <person name="Ozaki K."/>
            <person name="Hirao M."/>
            <person name="Ohmori Y."/>
            <person name="Kawabata A."/>
            <person name="Hikiji T."/>
            <person name="Kobatake N."/>
            <person name="Inagaki H."/>
            <person name="Ikema Y."/>
            <person name="Okamoto S."/>
            <person name="Okitani R."/>
            <person name="Kawakami T."/>
            <person name="Noguchi S."/>
            <person name="Itoh T."/>
            <person name="Shigeta K."/>
            <person name="Senba T."/>
            <person name="Matsumura K."/>
            <person name="Nakajima Y."/>
            <person name="Mizuno T."/>
            <person name="Morinaga M."/>
            <person name="Sasaki M."/>
            <person name="Togashi T."/>
            <person name="Oyama M."/>
            <person name="Hata H."/>
            <person name="Watanabe M."/>
            <person name="Komatsu T."/>
            <person name="Mizushima-Sugano J."/>
            <person name="Satoh T."/>
            <person name="Shirai Y."/>
            <person name="Takahashi Y."/>
            <person name="Nakagawa K."/>
            <person name="Okumura K."/>
            <person name="Nagase T."/>
            <person name="Nomura N."/>
            <person name="Kikuchi H."/>
            <person name="Masuho Y."/>
            <person name="Yamashita R."/>
            <person name="Nakai K."/>
            <person name="Yada T."/>
            <person name="Nakamura Y."/>
            <person name="Ohara O."/>
            <person name="Isogai T."/>
            <person name="Sugano S."/>
        </authorList>
    </citation>
    <scope>NUCLEOTIDE SEQUENCE [LARGE SCALE MRNA] (ISOFORM 1)</scope>
</reference>
<reference key="6">
    <citation type="journal article" date="2003" name="Nature">
        <title>The DNA sequence of human chromosome 7.</title>
        <authorList>
            <person name="Hillier L.W."/>
            <person name="Fulton R.S."/>
            <person name="Fulton L.A."/>
            <person name="Graves T.A."/>
            <person name="Pepin K.H."/>
            <person name="Wagner-McPherson C."/>
            <person name="Layman D."/>
            <person name="Maas J."/>
            <person name="Jaeger S."/>
            <person name="Walker R."/>
            <person name="Wylie K."/>
            <person name="Sekhon M."/>
            <person name="Becker M.C."/>
            <person name="O'Laughlin M.D."/>
            <person name="Schaller M.E."/>
            <person name="Fewell G.A."/>
            <person name="Delehaunty K.D."/>
            <person name="Miner T.L."/>
            <person name="Nash W.E."/>
            <person name="Cordes M."/>
            <person name="Du H."/>
            <person name="Sun H."/>
            <person name="Edwards J."/>
            <person name="Bradshaw-Cordum H."/>
            <person name="Ali J."/>
            <person name="Andrews S."/>
            <person name="Isak A."/>
            <person name="Vanbrunt A."/>
            <person name="Nguyen C."/>
            <person name="Du F."/>
            <person name="Lamar B."/>
            <person name="Courtney L."/>
            <person name="Kalicki J."/>
            <person name="Ozersky P."/>
            <person name="Bielicki L."/>
            <person name="Scott K."/>
            <person name="Holmes A."/>
            <person name="Harkins R."/>
            <person name="Harris A."/>
            <person name="Strong C.M."/>
            <person name="Hou S."/>
            <person name="Tomlinson C."/>
            <person name="Dauphin-Kohlberg S."/>
            <person name="Kozlowicz-Reilly A."/>
            <person name="Leonard S."/>
            <person name="Rohlfing T."/>
            <person name="Rock S.M."/>
            <person name="Tin-Wollam A.-M."/>
            <person name="Abbott A."/>
            <person name="Minx P."/>
            <person name="Maupin R."/>
            <person name="Strowmatt C."/>
            <person name="Latreille P."/>
            <person name="Miller N."/>
            <person name="Johnson D."/>
            <person name="Murray J."/>
            <person name="Woessner J.P."/>
            <person name="Wendl M.C."/>
            <person name="Yang S.-P."/>
            <person name="Schultz B.R."/>
            <person name="Wallis J.W."/>
            <person name="Spieth J."/>
            <person name="Bieri T.A."/>
            <person name="Nelson J.O."/>
            <person name="Berkowicz N."/>
            <person name="Wohldmann P.E."/>
            <person name="Cook L.L."/>
            <person name="Hickenbotham M.T."/>
            <person name="Eldred J."/>
            <person name="Williams D."/>
            <person name="Bedell J.A."/>
            <person name="Mardis E.R."/>
            <person name="Clifton S.W."/>
            <person name="Chissoe S.L."/>
            <person name="Marra M.A."/>
            <person name="Raymond C."/>
            <person name="Haugen E."/>
            <person name="Gillett W."/>
            <person name="Zhou Y."/>
            <person name="James R."/>
            <person name="Phelps K."/>
            <person name="Iadanoto S."/>
            <person name="Bubb K."/>
            <person name="Simms E."/>
            <person name="Levy R."/>
            <person name="Clendenning J."/>
            <person name="Kaul R."/>
            <person name="Kent W.J."/>
            <person name="Furey T.S."/>
            <person name="Baertsch R.A."/>
            <person name="Brent M.R."/>
            <person name="Keibler E."/>
            <person name="Flicek P."/>
            <person name="Bork P."/>
            <person name="Suyama M."/>
            <person name="Bailey J.A."/>
            <person name="Portnoy M.E."/>
            <person name="Torrents D."/>
            <person name="Chinwalla A.T."/>
            <person name="Gish W.R."/>
            <person name="Eddy S.R."/>
            <person name="McPherson J.D."/>
            <person name="Olson M.V."/>
            <person name="Eichler E.E."/>
            <person name="Green E.D."/>
            <person name="Waterston R.H."/>
            <person name="Wilson R.K."/>
        </authorList>
    </citation>
    <scope>NUCLEOTIDE SEQUENCE [LARGE SCALE GENOMIC DNA]</scope>
</reference>
<reference key="7">
    <citation type="journal article" date="2003" name="Science">
        <title>Human chromosome 7: DNA sequence and biology.</title>
        <authorList>
            <person name="Scherer S.W."/>
            <person name="Cheung J."/>
            <person name="MacDonald J.R."/>
            <person name="Osborne L.R."/>
            <person name="Nakabayashi K."/>
            <person name="Herbrick J.-A."/>
            <person name="Carson A.R."/>
            <person name="Parker-Katiraee L."/>
            <person name="Skaug J."/>
            <person name="Khaja R."/>
            <person name="Zhang J."/>
            <person name="Hudek A.K."/>
            <person name="Li M."/>
            <person name="Haddad M."/>
            <person name="Duggan G.E."/>
            <person name="Fernandez B.A."/>
            <person name="Kanematsu E."/>
            <person name="Gentles S."/>
            <person name="Christopoulos C.C."/>
            <person name="Choufani S."/>
            <person name="Kwasnicka D."/>
            <person name="Zheng X.H."/>
            <person name="Lai Z."/>
            <person name="Nusskern D.R."/>
            <person name="Zhang Q."/>
            <person name="Gu Z."/>
            <person name="Lu F."/>
            <person name="Zeesman S."/>
            <person name="Nowaczyk M.J."/>
            <person name="Teshima I."/>
            <person name="Chitayat D."/>
            <person name="Shuman C."/>
            <person name="Weksberg R."/>
            <person name="Zackai E.H."/>
            <person name="Grebe T.A."/>
            <person name="Cox S.R."/>
            <person name="Kirkpatrick S.J."/>
            <person name="Rahman N."/>
            <person name="Friedman J.M."/>
            <person name="Heng H.H.Q."/>
            <person name="Pelicci P.G."/>
            <person name="Lo-Coco F."/>
            <person name="Belloni E."/>
            <person name="Shaffer L.G."/>
            <person name="Pober B."/>
            <person name="Morton C.C."/>
            <person name="Gusella J.F."/>
            <person name="Bruns G.A.P."/>
            <person name="Korf B.R."/>
            <person name="Quade B.J."/>
            <person name="Ligon A.H."/>
            <person name="Ferguson H."/>
            <person name="Higgins A.W."/>
            <person name="Leach N.T."/>
            <person name="Herrick S.R."/>
            <person name="Lemyre E."/>
            <person name="Farra C.G."/>
            <person name="Kim H.-G."/>
            <person name="Summers A.M."/>
            <person name="Gripp K.W."/>
            <person name="Roberts W."/>
            <person name="Szatmari P."/>
            <person name="Winsor E.J.T."/>
            <person name="Grzeschik K.-H."/>
            <person name="Teebi A."/>
            <person name="Minassian B.A."/>
            <person name="Kere J."/>
            <person name="Armengol L."/>
            <person name="Pujana M.A."/>
            <person name="Estivill X."/>
            <person name="Wilson M.D."/>
            <person name="Koop B.F."/>
            <person name="Tosi S."/>
            <person name="Moore G.E."/>
            <person name="Boright A.P."/>
            <person name="Zlotorynski E."/>
            <person name="Kerem B."/>
            <person name="Kroisel P.M."/>
            <person name="Petek E."/>
            <person name="Oscier D.G."/>
            <person name="Mould S.J."/>
            <person name="Doehner H."/>
            <person name="Doehner K."/>
            <person name="Rommens J.M."/>
            <person name="Vincent J.B."/>
            <person name="Venter J.C."/>
            <person name="Li P.W."/>
            <person name="Mural R.J."/>
            <person name="Adams M.D."/>
            <person name="Tsui L.-C."/>
        </authorList>
    </citation>
    <scope>NUCLEOTIDE SEQUENCE [LARGE SCALE GENOMIC DNA]</scope>
</reference>
<reference key="8">
    <citation type="submission" date="2005-09" db="EMBL/GenBank/DDBJ databases">
        <authorList>
            <person name="Mural R.J."/>
            <person name="Istrail S."/>
            <person name="Sutton G.G."/>
            <person name="Florea L."/>
            <person name="Halpern A.L."/>
            <person name="Mobarry C.M."/>
            <person name="Lippert R."/>
            <person name="Walenz B."/>
            <person name="Shatkay H."/>
            <person name="Dew I."/>
            <person name="Miller J.R."/>
            <person name="Flanigan M.J."/>
            <person name="Edwards N.J."/>
            <person name="Bolanos R."/>
            <person name="Fasulo D."/>
            <person name="Halldorsson B.V."/>
            <person name="Hannenhalli S."/>
            <person name="Turner R."/>
            <person name="Yooseph S."/>
            <person name="Lu F."/>
            <person name="Nusskern D.R."/>
            <person name="Shue B.C."/>
            <person name="Zheng X.H."/>
            <person name="Zhong F."/>
            <person name="Delcher A.L."/>
            <person name="Huson D.H."/>
            <person name="Kravitz S.A."/>
            <person name="Mouchard L."/>
            <person name="Reinert K."/>
            <person name="Remington K.A."/>
            <person name="Clark A.G."/>
            <person name="Waterman M.S."/>
            <person name="Eichler E.E."/>
            <person name="Adams M.D."/>
            <person name="Hunkapiller M.W."/>
            <person name="Myers E.W."/>
            <person name="Venter J.C."/>
        </authorList>
    </citation>
    <scope>NUCLEOTIDE SEQUENCE [LARGE SCALE GENOMIC DNA]</scope>
</reference>
<reference key="9">
    <citation type="journal article" date="2004" name="Genome Res.">
        <title>The status, quality, and expansion of the NIH full-length cDNA project: the Mammalian Gene Collection (MGC).</title>
        <authorList>
            <consortium name="The MGC Project Team"/>
        </authorList>
    </citation>
    <scope>NUCLEOTIDE SEQUENCE [LARGE SCALE MRNA] (ISOFORM 1)</scope>
    <scope>VARIANTS GLN-111; ILE-230 AND PHE-296</scope>
    <source>
        <tissue>Cervix</tissue>
        <tissue>Kidney</tissue>
        <tissue>Pancreas</tissue>
    </source>
</reference>
<reference key="10">
    <citation type="journal article" date="1995" name="Mol. Endocrinol.">
        <title>Two classes of proteins dependent on either the presence or absence of thyroid hormone for interaction with the thyroid hormone receptor.</title>
        <authorList>
            <person name="Lee J.W."/>
            <person name="Choi H.-S."/>
            <person name="Gyuris J."/>
            <person name="Brent R."/>
            <person name="Moore D.D."/>
        </authorList>
    </citation>
    <scope>NUCLEOTIDE SEQUENCE [MRNA] OF 310-476 (ISOFORM 1)</scope>
</reference>
<reference key="11">
    <citation type="journal article" date="2000" name="Eur. J. Cell Biol.">
        <title>The zyxin-related protein TRIP6 interacts with PDZ motifs in the adaptor protein RIL and the protein tyrosine phosphatase PTP-BL.</title>
        <authorList>
            <person name="Cuppen E."/>
            <person name="van Ham M."/>
            <person name="Wansink D.G."/>
            <person name="de Leeuw A."/>
            <person name="Wieringa B."/>
            <person name="Hendriks W."/>
        </authorList>
    </citation>
    <scope>INTERACTION WITH PDLIM4 AND PTPN13</scope>
    <scope>SUBCELLULAR LOCATION</scope>
</reference>
<reference key="12">
    <citation type="journal article" date="2004" name="Genes Dev.">
        <title>A nuclear isoform of the focal adhesion LIM-domain protein Trip6 integrates activating and repressing signals at AP-1- and NF-kappaB-regulated promoters.</title>
        <authorList>
            <person name="Kassel O."/>
            <person name="Schneider S."/>
            <person name="Heilbock C."/>
            <person name="Litfin M."/>
            <person name="Goettlicher M."/>
            <person name="Herrlich P."/>
        </authorList>
    </citation>
    <scope>FUNCTION</scope>
</reference>
<reference key="13">
    <citation type="journal article" date="2004" name="J. Biol. Chem.">
        <title>TRIP6 enhances lysophosphatidic acid-induced cell migration by interacting with the lysophosphatidic acid 2 receptor.</title>
        <authorList>
            <person name="Xu J."/>
            <person name="Lai Y.-J."/>
            <person name="Lin W.-C."/>
            <person name="Lin F.-T."/>
        </authorList>
    </citation>
    <scope>INTERACTION WITH LPAR2</scope>
    <scope>FUNCTION</scope>
</reference>
<reference key="14">
    <citation type="journal article" date="2005" name="FEBS Lett.">
        <title>The tumor suppressor Scrib selectively interacts with specific members of the zyxin family of proteins.</title>
        <authorList>
            <person name="Petit M.M.R."/>
            <person name="Crombez K.R.M.O."/>
            <person name="Vervenne H.B.V.K."/>
            <person name="Weyns N."/>
            <person name="Van de Ven W.J.M."/>
        </authorList>
    </citation>
    <scope>INTERACTION WITH SCRIB</scope>
</reference>
<reference key="15">
    <citation type="journal article" date="2005" name="Mol. Cell. Biol.">
        <title>c-Src-mediated phosphorylation of TRIP6 regulates its function in lysophosphatidic acid-induced cell migration.</title>
        <authorList>
            <person name="Lai Y.-J."/>
            <person name="Chen C.-S."/>
            <person name="Lin W.-C."/>
            <person name="Lin F.-T."/>
        </authorList>
    </citation>
    <scope>PHOSPHORYLATION AT TYR-55</scope>
</reference>
<reference key="16">
    <citation type="journal article" date="2006" name="Cell">
        <title>Global, in vivo, and site-specific phosphorylation dynamics in signaling networks.</title>
        <authorList>
            <person name="Olsen J.V."/>
            <person name="Blagoev B."/>
            <person name="Gnad F."/>
            <person name="Macek B."/>
            <person name="Kumar C."/>
            <person name="Mortensen P."/>
            <person name="Mann M."/>
        </authorList>
    </citation>
    <scope>PHOSPHORYLATION [LARGE SCALE ANALYSIS] AT SER-92</scope>
    <scope>IDENTIFICATION BY MASS SPECTROMETRY [LARGE SCALE ANALYSIS]</scope>
    <source>
        <tissue>Cervix carcinoma</tissue>
    </source>
</reference>
<reference key="17">
    <citation type="journal article" date="2006" name="Cell. Signal.">
        <title>TRIP6 transcriptional co-activator is a novel substrate of AMP-activated protein kinase.</title>
        <authorList>
            <person name="Solaz-Fuster M.C."/>
            <person name="Gimeno-Alcaniz J.V."/>
            <person name="Casado M."/>
            <person name="Sanz P."/>
        </authorList>
    </citation>
    <scope>INTERACTION WITH PRKAA2</scope>
    <scope>SUBCELLULAR LOCATION</scope>
    <scope>MUTAGENESIS OF SER-101 AND SER-102</scope>
    <scope>FUNCTION</scope>
</reference>
<reference key="18">
    <citation type="journal article" date="2006" name="J. Cell Biol.">
        <title>Supervillin modulation of focal adhesions involving TRIP6/ZRP-1.</title>
        <authorList>
            <person name="Takizawa N."/>
            <person name="Smith T.C."/>
            <person name="Nebl T."/>
            <person name="Crowley J.L."/>
            <person name="Palmieri S.J."/>
            <person name="Lifshitz L.M."/>
            <person name="Ehrhardt A.G."/>
            <person name="Hoffman L.M."/>
            <person name="Beckerle M.C."/>
            <person name="Luna E.J."/>
        </authorList>
    </citation>
    <scope>INTERACTION WITH SVIL</scope>
</reference>
<reference key="19">
    <citation type="journal article" date="2006" name="Proc. Natl. Acad. Sci. U.S.A.">
        <title>Salmonella typhimurium disseminates within its host by manipulating the motility of infected cells.</title>
        <authorList>
            <person name="Worley M.J."/>
            <person name="Nieman G.S."/>
            <person name="Geddes K."/>
            <person name="Heffron F."/>
        </authorList>
    </citation>
    <scope>INTERACTION WITH SALMONELLA TYPHIMURIUM SSEI</scope>
</reference>
<reference key="20">
    <citation type="journal article" date="2007" name="J. Biol. Chem.">
        <title>PTPL1/FAP-1 negatively regulates TRIP6 function in lysophosphatidic acid-induced cell migration.</title>
        <authorList>
            <person name="Lai Y.-J."/>
            <person name="Lin W.-C."/>
            <person name="Lin F.-T."/>
        </authorList>
    </citation>
    <scope>INTERACTION WITH PTPN13</scope>
    <scope>PHOSPHORYLATION AT TYR-55</scope>
</reference>
<reference key="21">
    <citation type="journal article" date="2008" name="Proc. Natl. Acad. Sci. U.S.A.">
        <title>A quantitative atlas of mitotic phosphorylation.</title>
        <authorList>
            <person name="Dephoure N."/>
            <person name="Zhou C."/>
            <person name="Villen J."/>
            <person name="Beausoleil S.A."/>
            <person name="Bakalarski C.E."/>
            <person name="Elledge S.J."/>
            <person name="Gygi S.P."/>
        </authorList>
    </citation>
    <scope>PHOSPHORYLATION [LARGE SCALE ANALYSIS] AT SER-142</scope>
    <scope>IDENTIFICATION BY MASS SPECTROMETRY [LARGE SCALE ANALYSIS]</scope>
    <source>
        <tissue>Cervix carcinoma</tissue>
    </source>
</reference>
<reference key="22">
    <citation type="journal article" date="2009" name="FASEB J.">
        <title>TRIP6, a novel molecular partner of the MAGI-1 scaffolding molecule, promotes invasiveness.</title>
        <authorList>
            <person name="Chastre E."/>
            <person name="Abdessamad M."/>
            <person name="Kruglov A."/>
            <person name="Bruyneel E."/>
            <person name="Bracke M."/>
            <person name="Di Gioia Y."/>
            <person name="Beckerle M.C."/>
            <person name="van Roy F."/>
            <person name="Kotelevets L."/>
        </authorList>
    </citation>
    <scope>INTERACTION WITH MAGI1 AND PTPN13</scope>
    <scope>MUTAGENESIS OF THR-474</scope>
    <scope>TISSUE SPECIFICITY</scope>
    <scope>FUNCTION</scope>
</reference>
<reference key="23">
    <citation type="journal article" date="2010" name="Sci. Signal.">
        <title>Quantitative phosphoproteomics reveals widespread full phosphorylation site occupancy during mitosis.</title>
        <authorList>
            <person name="Olsen J.V."/>
            <person name="Vermeulen M."/>
            <person name="Santamaria A."/>
            <person name="Kumar C."/>
            <person name="Miller M.L."/>
            <person name="Jensen L.J."/>
            <person name="Gnad F."/>
            <person name="Cox J."/>
            <person name="Jensen T.S."/>
            <person name="Nigg E.A."/>
            <person name="Brunak S."/>
            <person name="Mann M."/>
        </authorList>
    </citation>
    <scope>PHOSPHORYLATION [LARGE SCALE ANALYSIS] AT SER-92</scope>
    <scope>IDENTIFICATION BY MASS SPECTROMETRY [LARGE SCALE ANALYSIS]</scope>
    <source>
        <tissue>Cervix carcinoma</tissue>
    </source>
</reference>
<reference key="24">
    <citation type="journal article" date="2011" name="BMC Syst. Biol.">
        <title>Initial characterization of the human central proteome.</title>
        <authorList>
            <person name="Burkard T.R."/>
            <person name="Planyavsky M."/>
            <person name="Kaupe I."/>
            <person name="Breitwieser F.P."/>
            <person name="Buerckstuemmer T."/>
            <person name="Bennett K.L."/>
            <person name="Superti-Furga G."/>
            <person name="Colinge J."/>
        </authorList>
    </citation>
    <scope>IDENTIFICATION BY MASS SPECTROMETRY [LARGE SCALE ANALYSIS]</scope>
</reference>
<reference key="25">
    <citation type="journal article" date="2013" name="J. Proteome Res.">
        <title>Toward a comprehensive characterization of a human cancer cell phosphoproteome.</title>
        <authorList>
            <person name="Zhou H."/>
            <person name="Di Palma S."/>
            <person name="Preisinger C."/>
            <person name="Peng M."/>
            <person name="Polat A.N."/>
            <person name="Heck A.J."/>
            <person name="Mohammed S."/>
        </authorList>
    </citation>
    <scope>PHOSPHORYLATION [LARGE SCALE ANALYSIS] AT SER-142; SER-189 AND SER-249</scope>
    <scope>IDENTIFICATION BY MASS SPECTROMETRY [LARGE SCALE ANALYSIS]</scope>
    <source>
        <tissue>Erythroleukemia</tissue>
    </source>
</reference>
<reference key="26">
    <citation type="journal article" date="2014" name="J. Proteomics">
        <title>An enzyme assisted RP-RPLC approach for in-depth analysis of human liver phosphoproteome.</title>
        <authorList>
            <person name="Bian Y."/>
            <person name="Song C."/>
            <person name="Cheng K."/>
            <person name="Dong M."/>
            <person name="Wang F."/>
            <person name="Huang J."/>
            <person name="Sun D."/>
            <person name="Wang L."/>
            <person name="Ye M."/>
            <person name="Zou H."/>
        </authorList>
    </citation>
    <scope>IDENTIFICATION BY MASS SPECTROMETRY [LARGE SCALE ANALYSIS]</scope>
    <source>
        <tissue>Liver</tissue>
    </source>
</reference>
<reference key="27">
    <citation type="journal article" date="2014" name="Mol. Cell. Proteomics">
        <title>Immunoaffinity enrichment and mass spectrometry analysis of protein methylation.</title>
        <authorList>
            <person name="Guo A."/>
            <person name="Gu H."/>
            <person name="Zhou J."/>
            <person name="Mulhern D."/>
            <person name="Wang Y."/>
            <person name="Lee K.A."/>
            <person name="Yang V."/>
            <person name="Aguiar M."/>
            <person name="Kornhauser J."/>
            <person name="Jia X."/>
            <person name="Ren J."/>
            <person name="Beausoleil S.A."/>
            <person name="Silva J.C."/>
            <person name="Vemulapalli V."/>
            <person name="Bedford M.T."/>
            <person name="Comb M.J."/>
        </authorList>
    </citation>
    <scope>METHYLATION [LARGE SCALE ANALYSIS] AT ARG-25; ARG-111; ARG-179; ARG-186; ARG-205; ARG-236 AND ARG-238</scope>
    <scope>IDENTIFICATION BY MASS SPECTROMETRY [LARGE SCALE ANALYSIS]</scope>
    <source>
        <tissue>Colon carcinoma</tissue>
    </source>
</reference>
<reference key="28">
    <citation type="submission" date="2006-10" db="PDB data bank">
        <title>Solution structure of the first and second LIM domain of thyroid receptor interacting protein 6 (TRIP6).</title>
        <authorList>
            <consortium name="RIKEN structural genomics initiative (RSGI)"/>
        </authorList>
    </citation>
    <scope>STRUCTURE BY NMR OF 279-396</scope>
</reference>
<protein>
    <recommendedName>
        <fullName>Thyroid receptor-interacting protein 6</fullName>
        <shortName>TR-interacting protein 6</shortName>
        <shortName>TRIP-6</shortName>
    </recommendedName>
    <alternativeName>
        <fullName>Opa-interacting protein 1</fullName>
        <shortName>OIP-1</shortName>
    </alternativeName>
    <alternativeName>
        <fullName>Zyxin-related protein 1</fullName>
        <shortName>ZRP-1</shortName>
    </alternativeName>
</protein>